<keyword id="KW-0002">3D-structure</keyword>
<keyword id="KW-0238">DNA-binding</keyword>
<keyword id="KW-0240">DNA-directed RNA polymerase</keyword>
<keyword id="KW-1017">Isopeptide bond</keyword>
<keyword id="KW-0460">Magnesium</keyword>
<keyword id="KW-0479">Metal-binding</keyword>
<keyword id="KW-0548">Nucleotidyltransferase</keyword>
<keyword id="KW-0539">Nucleus</keyword>
<keyword id="KW-0597">Phosphoprotein</keyword>
<keyword id="KW-1185">Reference proteome</keyword>
<keyword id="KW-0677">Repeat</keyword>
<keyword id="KW-0804">Transcription</keyword>
<keyword id="KW-0808">Transferase</keyword>
<keyword id="KW-0832">Ubl conjugation</keyword>
<keyword id="KW-0862">Zinc</keyword>
<feature type="chain" id="PRO_0000073946" description="DNA-directed RNA polymerase II subunit RPB1">
    <location>
        <begin position="1"/>
        <end position="1733"/>
    </location>
</feature>
<feature type="repeat" description="1">
    <location>
        <begin position="1549"/>
        <end position="1555"/>
    </location>
</feature>
<feature type="repeat" description="2">
    <location>
        <begin position="1556"/>
        <end position="1562"/>
    </location>
</feature>
<feature type="repeat" description="3">
    <location>
        <begin position="1563"/>
        <end position="1569"/>
    </location>
</feature>
<feature type="repeat" description="4">
    <location>
        <begin position="1570"/>
        <end position="1576"/>
    </location>
</feature>
<feature type="repeat" description="5">
    <location>
        <begin position="1577"/>
        <end position="1583"/>
    </location>
</feature>
<feature type="repeat" description="6">
    <location>
        <begin position="1584"/>
        <end position="1590"/>
    </location>
</feature>
<feature type="repeat" description="7">
    <location>
        <begin position="1591"/>
        <end position="1597"/>
    </location>
</feature>
<feature type="repeat" description="8">
    <location>
        <begin position="1598"/>
        <end position="1604"/>
    </location>
</feature>
<feature type="repeat" description="9">
    <location>
        <begin position="1605"/>
        <end position="1611"/>
    </location>
</feature>
<feature type="repeat" description="10">
    <location>
        <begin position="1612"/>
        <end position="1618"/>
    </location>
</feature>
<feature type="repeat" description="11">
    <location>
        <begin position="1619"/>
        <end position="1625"/>
    </location>
</feature>
<feature type="repeat" description="12">
    <location>
        <begin position="1626"/>
        <end position="1632"/>
    </location>
</feature>
<feature type="repeat" description="13">
    <location>
        <begin position="1633"/>
        <end position="1639"/>
    </location>
</feature>
<feature type="repeat" description="14">
    <location>
        <begin position="1640"/>
        <end position="1646"/>
    </location>
</feature>
<feature type="repeat" description="15">
    <location>
        <begin position="1647"/>
        <end position="1653"/>
    </location>
</feature>
<feature type="repeat" description="16">
    <location>
        <begin position="1654"/>
        <end position="1660"/>
    </location>
</feature>
<feature type="repeat" description="17">
    <location>
        <begin position="1661"/>
        <end position="1667"/>
    </location>
</feature>
<feature type="repeat" description="18">
    <location>
        <begin position="1668"/>
        <end position="1674"/>
    </location>
</feature>
<feature type="repeat" description="19">
    <location>
        <begin position="1675"/>
        <end position="1681"/>
    </location>
</feature>
<feature type="repeat" description="20">
    <location>
        <begin position="1682"/>
        <end position="1688"/>
    </location>
</feature>
<feature type="repeat" description="21">
    <location>
        <begin position="1689"/>
        <end position="1695"/>
    </location>
</feature>
<feature type="repeat" description="22">
    <location>
        <begin position="1696"/>
        <end position="1702"/>
    </location>
</feature>
<feature type="repeat" description="23">
    <location>
        <begin position="1703"/>
        <end position="1709"/>
    </location>
</feature>
<feature type="repeat" description="24; approximate">
    <location>
        <begin position="1710"/>
        <end position="1716"/>
    </location>
</feature>
<feature type="region of interest" description="Lid loop">
    <location>
        <begin position="248"/>
        <end position="260"/>
    </location>
</feature>
<feature type="region of interest" description="Rudder loop">
    <location>
        <begin position="306"/>
        <end position="323"/>
    </location>
</feature>
<feature type="region of interest" description="Bridging helix">
    <location>
        <begin position="810"/>
        <end position="822"/>
    </location>
</feature>
<feature type="region of interest" description="Disordered" evidence="1">
    <location>
        <begin position="1537"/>
        <end position="1733"/>
    </location>
</feature>
<feature type="region of interest" description="C-terminal domain (CTD); 24 X 7 AA approximate tandem repeats of Y-S-P-T-S-P-[A-S-N-G]">
    <location>
        <begin position="1549"/>
        <end position="1716"/>
    </location>
</feature>
<feature type="compositionally biased region" description="Low complexity" evidence="1">
    <location>
        <begin position="1538"/>
        <end position="1719"/>
    </location>
</feature>
<feature type="compositionally biased region" description="Basic and acidic residues" evidence="1">
    <location>
        <begin position="1720"/>
        <end position="1733"/>
    </location>
</feature>
<feature type="binding site" evidence="15 17 22 23">
    <location>
        <position position="67"/>
    </location>
    <ligand>
        <name>Zn(2+)</name>
        <dbReference type="ChEBI" id="CHEBI:29105"/>
        <label>1</label>
    </ligand>
</feature>
<feature type="binding site" evidence="15 17 22 23">
    <location>
        <position position="70"/>
    </location>
    <ligand>
        <name>Zn(2+)</name>
        <dbReference type="ChEBI" id="CHEBI:29105"/>
        <label>1</label>
    </ligand>
</feature>
<feature type="binding site" evidence="15 17 22 23">
    <location>
        <position position="77"/>
    </location>
    <ligand>
        <name>Zn(2+)</name>
        <dbReference type="ChEBI" id="CHEBI:29105"/>
        <label>1</label>
    </ligand>
</feature>
<feature type="binding site" evidence="15 17 22 23">
    <location>
        <position position="80"/>
    </location>
    <ligand>
        <name>Zn(2+)</name>
        <dbReference type="ChEBI" id="CHEBI:29105"/>
        <label>1</label>
    </ligand>
</feature>
<feature type="binding site" evidence="15 17 22 23">
    <location>
        <position position="107"/>
    </location>
    <ligand>
        <name>Zn(2+)</name>
        <dbReference type="ChEBI" id="CHEBI:29105"/>
        <label>2</label>
    </ligand>
</feature>
<feature type="binding site" evidence="15 17 22 23">
    <location>
        <position position="110"/>
    </location>
    <ligand>
        <name>Zn(2+)</name>
        <dbReference type="ChEBI" id="CHEBI:29105"/>
        <label>2</label>
    </ligand>
</feature>
<feature type="binding site" evidence="15 17 22 23">
    <location>
        <position position="148"/>
    </location>
    <ligand>
        <name>Zn(2+)</name>
        <dbReference type="ChEBI" id="CHEBI:29105"/>
        <label>2</label>
    </ligand>
</feature>
<feature type="binding site" evidence="15 17 22 23">
    <location>
        <position position="167"/>
    </location>
    <ligand>
        <name>Zn(2+)</name>
        <dbReference type="ChEBI" id="CHEBI:29105"/>
        <label>2</label>
    </ligand>
</feature>
<feature type="binding site" evidence="15 17 22 23">
    <location>
        <position position="481"/>
    </location>
    <ligand>
        <name>Mg(2+)</name>
        <dbReference type="ChEBI" id="CHEBI:18420"/>
        <label>1</label>
        <note>catalytic</note>
    </ligand>
</feature>
<feature type="binding site" evidence="15 17 22 23">
    <location>
        <position position="481"/>
    </location>
    <ligand>
        <name>Mg(2+)</name>
        <dbReference type="ChEBI" id="CHEBI:18420"/>
        <label>2</label>
        <note>ligand shared with RPB2</note>
    </ligand>
</feature>
<feature type="binding site" evidence="15 17 22 23">
    <location>
        <position position="483"/>
    </location>
    <ligand>
        <name>Mg(2+)</name>
        <dbReference type="ChEBI" id="CHEBI:18420"/>
        <label>1</label>
        <note>catalytic</note>
    </ligand>
</feature>
<feature type="binding site" evidence="15 17 22 23">
    <location>
        <position position="483"/>
    </location>
    <ligand>
        <name>Mg(2+)</name>
        <dbReference type="ChEBI" id="CHEBI:18420"/>
        <label>2</label>
        <note>ligand shared with RPB2</note>
    </ligand>
</feature>
<feature type="binding site" evidence="15 17 22 23">
    <location>
        <position position="485"/>
    </location>
    <ligand>
        <name>Mg(2+)</name>
        <dbReference type="ChEBI" id="CHEBI:18420"/>
        <label>1</label>
        <note>catalytic</note>
    </ligand>
</feature>
<feature type="modified residue" description="Phosphothreonine" evidence="24">
    <location>
        <position position="1471"/>
    </location>
</feature>
<feature type="cross-link" description="Glycyl lysine isopeptide (Lys-Gly) (interchain with G-Cter in ubiquitin)" evidence="25">
    <location>
        <position position="695"/>
    </location>
</feature>
<feature type="cross-link" description="Glycyl lysine isopeptide (Lys-Gly) (interchain with G-Cter in ubiquitin)" evidence="21 25">
    <location>
        <position position="1246"/>
    </location>
</feature>
<feature type="cross-link" description="Glycyl lysine isopeptide (Lys-Gly) (interchain with G-Cter in ubiquitin)" evidence="25">
    <location>
        <position position="1350"/>
    </location>
</feature>
<feature type="sequence variant" description="In strain: A364A.">
    <location>
        <begin position="1653"/>
        <end position="1659"/>
    </location>
</feature>
<feature type="mutagenesis site" description="Impairs ubiquitination during transcription stress." evidence="18">
    <original>K</original>
    <variation>R</variation>
    <location>
        <position position="1246"/>
    </location>
</feature>
<feature type="sequence conflict" description="In Ref. 1; CAA26904." evidence="20" ref="1">
    <original>A</original>
    <variation>V</variation>
    <location>
        <position position="1514"/>
    </location>
</feature>
<feature type="sequence conflict" description="In Ref. 1; CAA26904." evidence="20" ref="1">
    <original>G</original>
    <variation>A</variation>
    <location>
        <position position="1524"/>
    </location>
</feature>
<feature type="sequence conflict" description="In Ref. 1." evidence="20" ref="1">
    <original>T</original>
    <variation>M</variation>
    <location>
        <position position="1601"/>
    </location>
</feature>
<feature type="strand" evidence="29">
    <location>
        <begin position="16"/>
        <end position="18"/>
    </location>
</feature>
<feature type="helix" evidence="29">
    <location>
        <begin position="24"/>
        <end position="29"/>
    </location>
</feature>
<feature type="strand" evidence="42">
    <location>
        <begin position="32"/>
        <end position="34"/>
    </location>
</feature>
<feature type="strand" evidence="26">
    <location>
        <begin position="41"/>
        <end position="43"/>
    </location>
</feature>
<feature type="turn" evidence="48">
    <location>
        <begin position="44"/>
        <end position="46"/>
    </location>
</feature>
<feature type="strand" evidence="44">
    <location>
        <begin position="47"/>
        <end position="49"/>
    </location>
</feature>
<feature type="strand" evidence="29">
    <location>
        <begin position="51"/>
        <end position="54"/>
    </location>
</feature>
<feature type="strand" evidence="29">
    <location>
        <begin position="56"/>
        <end position="58"/>
    </location>
</feature>
<feature type="strand" evidence="48">
    <location>
        <begin position="61"/>
        <end position="65"/>
    </location>
</feature>
<feature type="strand" evidence="29">
    <location>
        <begin position="67"/>
        <end position="69"/>
    </location>
</feature>
<feature type="turn" evidence="48">
    <location>
        <begin position="74"/>
        <end position="76"/>
    </location>
</feature>
<feature type="strand" evidence="29">
    <location>
        <begin position="84"/>
        <end position="91"/>
    </location>
</feature>
<feature type="helix" evidence="29">
    <location>
        <begin position="93"/>
        <end position="95"/>
    </location>
</feature>
<feature type="helix" evidence="29">
    <location>
        <begin position="96"/>
        <end position="105"/>
    </location>
</feature>
<feature type="turn" evidence="29">
    <location>
        <begin position="108"/>
        <end position="110"/>
    </location>
</feature>
<feature type="strand" evidence="27">
    <location>
        <begin position="113"/>
        <end position="115"/>
    </location>
</feature>
<feature type="strand" evidence="32">
    <location>
        <begin position="117"/>
        <end position="119"/>
    </location>
</feature>
<feature type="helix" evidence="29">
    <location>
        <begin position="120"/>
        <end position="126"/>
    </location>
</feature>
<feature type="strand" evidence="30">
    <location>
        <begin position="127"/>
        <end position="129"/>
    </location>
</feature>
<feature type="helix" evidence="29">
    <location>
        <begin position="131"/>
        <end position="142"/>
    </location>
</feature>
<feature type="strand" evidence="29">
    <location>
        <begin position="150"/>
        <end position="152"/>
    </location>
</feature>
<feature type="strand" evidence="40">
    <location>
        <begin position="155"/>
        <end position="157"/>
    </location>
</feature>
<feature type="strand" evidence="48">
    <location>
        <begin position="160"/>
        <end position="162"/>
    </location>
</feature>
<feature type="strand" evidence="48">
    <location>
        <begin position="173"/>
        <end position="177"/>
    </location>
</feature>
<feature type="strand" evidence="49">
    <location>
        <begin position="178"/>
        <end position="180"/>
    </location>
</feature>
<feature type="strand" evidence="29">
    <location>
        <begin position="181"/>
        <end position="185"/>
    </location>
</feature>
<feature type="strand" evidence="29">
    <location>
        <begin position="187"/>
        <end position="190"/>
    </location>
</feature>
<feature type="strand" evidence="29">
    <location>
        <begin position="198"/>
        <end position="202"/>
    </location>
</feature>
<feature type="helix" evidence="29">
    <location>
        <begin position="204"/>
        <end position="211"/>
    </location>
</feature>
<feature type="strand" evidence="37">
    <location>
        <begin position="212"/>
        <end position="214"/>
    </location>
</feature>
<feature type="helix" evidence="29">
    <location>
        <begin position="216"/>
        <end position="221"/>
    </location>
</feature>
<feature type="turn" evidence="29">
    <location>
        <begin position="226"/>
        <end position="228"/>
    </location>
</feature>
<feature type="helix" evidence="29">
    <location>
        <begin position="231"/>
        <end position="234"/>
    </location>
</feature>
<feature type="strand" evidence="29">
    <location>
        <begin position="235"/>
        <end position="239"/>
    </location>
</feature>
<feature type="turn" evidence="29">
    <location>
        <begin position="244"/>
        <end position="246"/>
    </location>
</feature>
<feature type="strand" evidence="55">
    <location>
        <begin position="250"/>
        <end position="252"/>
    </location>
</feature>
<feature type="strand" evidence="29">
    <location>
        <begin position="253"/>
        <end position="255"/>
    </location>
</feature>
<feature type="strand" evidence="55">
    <location>
        <begin position="256"/>
        <end position="258"/>
    </location>
</feature>
<feature type="helix" evidence="29">
    <location>
        <begin position="261"/>
        <end position="280"/>
    </location>
</feature>
<feature type="turn" evidence="33">
    <location>
        <begin position="281"/>
        <end position="283"/>
    </location>
</feature>
<feature type="helix" evidence="29">
    <location>
        <begin position="286"/>
        <end position="304"/>
    </location>
</feature>
<feature type="strand" evidence="35">
    <location>
        <begin position="307"/>
        <end position="310"/>
    </location>
</feature>
<feature type="strand" evidence="43">
    <location>
        <begin position="313"/>
        <end position="315"/>
    </location>
</feature>
<feature type="strand" evidence="32">
    <location>
        <begin position="316"/>
        <end position="318"/>
    </location>
</feature>
<feature type="strand" evidence="48">
    <location>
        <begin position="319"/>
        <end position="321"/>
    </location>
</feature>
<feature type="helix" evidence="48">
    <location>
        <begin position="325"/>
        <end position="328"/>
    </location>
</feature>
<feature type="turn" evidence="29">
    <location>
        <begin position="330"/>
        <end position="335"/>
    </location>
</feature>
<feature type="helix" evidence="29">
    <location>
        <begin position="338"/>
        <end position="340"/>
    </location>
</feature>
<feature type="strand" evidence="48">
    <location>
        <begin position="341"/>
        <end position="344"/>
    </location>
</feature>
<feature type="strand" evidence="29">
    <location>
        <begin position="347"/>
        <end position="355"/>
    </location>
</feature>
<feature type="strand" evidence="46">
    <location>
        <begin position="357"/>
        <end position="359"/>
    </location>
</feature>
<feature type="strand" evidence="29">
    <location>
        <begin position="363"/>
        <end position="367"/>
    </location>
</feature>
<feature type="helix" evidence="29">
    <location>
        <begin position="368"/>
        <end position="371"/>
    </location>
</feature>
<feature type="strand" evidence="29">
    <location>
        <begin position="375"/>
        <end position="379"/>
    </location>
</feature>
<feature type="turn" evidence="29">
    <location>
        <begin position="382"/>
        <end position="384"/>
    </location>
</feature>
<feature type="helix" evidence="29">
    <location>
        <begin position="385"/>
        <end position="394"/>
    </location>
</feature>
<feature type="turn" evidence="29">
    <location>
        <begin position="395"/>
        <end position="397"/>
    </location>
</feature>
<feature type="strand" evidence="29">
    <location>
        <begin position="398"/>
        <end position="400"/>
    </location>
</feature>
<feature type="strand" evidence="29">
    <location>
        <begin position="402"/>
        <end position="406"/>
    </location>
</feature>
<feature type="strand" evidence="48">
    <location>
        <begin position="408"/>
        <end position="410"/>
    </location>
</feature>
<feature type="strand" evidence="29">
    <location>
        <begin position="412"/>
        <end position="414"/>
    </location>
</feature>
<feature type="turn" evidence="48">
    <location>
        <begin position="415"/>
        <end position="417"/>
    </location>
</feature>
<feature type="turn" evidence="29">
    <location>
        <begin position="419"/>
        <end position="422"/>
    </location>
</feature>
<feature type="strand" evidence="29">
    <location>
        <begin position="431"/>
        <end position="435"/>
    </location>
</feature>
<feature type="strand" evidence="29">
    <location>
        <begin position="441"/>
        <end position="445"/>
    </location>
</feature>
<feature type="helix" evidence="29">
    <location>
        <begin position="452"/>
        <end position="454"/>
    </location>
</feature>
<feature type="strand" evidence="29">
    <location>
        <begin position="455"/>
        <end position="470"/>
    </location>
</feature>
<feature type="helix" evidence="29">
    <location>
        <begin position="472"/>
        <end position="474"/>
    </location>
</feature>
<feature type="helix" evidence="29">
    <location>
        <begin position="475"/>
        <end position="478"/>
    </location>
</feature>
<feature type="strand" evidence="29">
    <location>
        <begin position="482"/>
        <end position="484"/>
    </location>
</feature>
<feature type="strand" evidence="29">
    <location>
        <begin position="486"/>
        <end position="490"/>
    </location>
</feature>
<feature type="helix" evidence="29">
    <location>
        <begin position="495"/>
        <end position="504"/>
    </location>
</feature>
<feature type="helix" evidence="29">
    <location>
        <begin position="507"/>
        <end position="510"/>
    </location>
</feature>
<feature type="strand" evidence="29">
    <location>
        <begin position="511"/>
        <end position="513"/>
    </location>
</feature>
<feature type="turn" evidence="29">
    <location>
        <begin position="514"/>
        <end position="517"/>
    </location>
</feature>
<feature type="strand" evidence="29">
    <location>
        <begin position="518"/>
        <end position="520"/>
    </location>
</feature>
<feature type="helix" evidence="29">
    <location>
        <begin position="525"/>
        <end position="535"/>
    </location>
</feature>
<feature type="strand" evidence="36">
    <location>
        <begin position="536"/>
        <end position="538"/>
    </location>
</feature>
<feature type="strand" evidence="29">
    <location>
        <begin position="540"/>
        <end position="542"/>
    </location>
</feature>
<feature type="helix" evidence="29">
    <location>
        <begin position="543"/>
        <end position="552"/>
    </location>
</feature>
<feature type="strand" evidence="48">
    <location>
        <begin position="553"/>
        <end position="555"/>
    </location>
</feature>
<feature type="strand" evidence="29">
    <location>
        <begin position="567"/>
        <end position="569"/>
    </location>
</feature>
<feature type="strand" evidence="29">
    <location>
        <begin position="571"/>
        <end position="573"/>
    </location>
</feature>
<feature type="helix" evidence="29">
    <location>
        <begin position="574"/>
        <end position="581"/>
    </location>
</feature>
<feature type="strand" evidence="29">
    <location>
        <begin position="588"/>
        <end position="590"/>
    </location>
</feature>
<feature type="strand" evidence="30">
    <location>
        <begin position="596"/>
        <end position="598"/>
    </location>
</feature>
<feature type="strand" evidence="34">
    <location>
        <begin position="600"/>
        <end position="602"/>
    </location>
</feature>
<feature type="strand" evidence="29">
    <location>
        <begin position="604"/>
        <end position="608"/>
    </location>
</feature>
<feature type="strand" evidence="29">
    <location>
        <begin position="611"/>
        <end position="615"/>
    </location>
</feature>
<feature type="helix" evidence="29">
    <location>
        <begin position="619"/>
        <end position="622"/>
    </location>
</feature>
<feature type="strand" evidence="54">
    <location>
        <begin position="623"/>
        <end position="625"/>
    </location>
</feature>
<feature type="strand" evidence="27">
    <location>
        <begin position="626"/>
        <end position="628"/>
    </location>
</feature>
<feature type="helix" evidence="29">
    <location>
        <begin position="629"/>
        <end position="637"/>
    </location>
</feature>
<feature type="helix" evidence="29">
    <location>
        <begin position="639"/>
        <end position="658"/>
    </location>
</feature>
<feature type="helix" evidence="29">
    <location>
        <begin position="666"/>
        <end position="669"/>
    </location>
</feature>
<feature type="helix" evidence="29">
    <location>
        <begin position="673"/>
        <end position="699"/>
    </location>
</feature>
<feature type="strand" evidence="27">
    <location>
        <begin position="706"/>
        <end position="708"/>
    </location>
</feature>
<feature type="helix" evidence="29">
    <location>
        <begin position="710"/>
        <end position="736"/>
    </location>
</feature>
<feature type="helix" evidence="29">
    <location>
        <begin position="742"/>
        <end position="749"/>
    </location>
</feature>
<feature type="strand" evidence="28">
    <location>
        <begin position="750"/>
        <end position="752"/>
    </location>
</feature>
<feature type="helix" evidence="29">
    <location>
        <begin position="755"/>
        <end position="762"/>
    </location>
</feature>
<feature type="strand" evidence="45">
    <location>
        <begin position="773"/>
        <end position="775"/>
    </location>
</feature>
<feature type="strand" evidence="48">
    <location>
        <begin position="779"/>
        <end position="781"/>
    </location>
</feature>
<feature type="strand" evidence="29">
    <location>
        <begin position="782"/>
        <end position="784"/>
    </location>
</feature>
<feature type="turn" evidence="29">
    <location>
        <begin position="794"/>
        <end position="798"/>
    </location>
</feature>
<feature type="turn" evidence="29">
    <location>
        <begin position="804"/>
        <end position="806"/>
    </location>
</feature>
<feature type="helix" evidence="29">
    <location>
        <begin position="810"/>
        <end position="845"/>
    </location>
</feature>
<feature type="strand" evidence="42">
    <location>
        <begin position="849"/>
        <end position="851"/>
    </location>
</feature>
<feature type="turn" evidence="42">
    <location>
        <begin position="852"/>
        <end position="854"/>
    </location>
</feature>
<feature type="strand" evidence="42">
    <location>
        <begin position="855"/>
        <end position="857"/>
    </location>
</feature>
<feature type="strand" evidence="52">
    <location>
        <begin position="859"/>
        <end position="861"/>
    </location>
</feature>
<feature type="strand" evidence="29">
    <location>
        <begin position="863"/>
        <end position="867"/>
    </location>
</feature>
<feature type="helix" evidence="29">
    <location>
        <begin position="868"/>
        <end position="870"/>
    </location>
</feature>
<feature type="helix" evidence="29">
    <location>
        <begin position="875"/>
        <end position="877"/>
    </location>
</feature>
<feature type="strand" evidence="29">
    <location>
        <begin position="878"/>
        <end position="882"/>
    </location>
</feature>
<feature type="helix" evidence="29">
    <location>
        <begin position="884"/>
        <end position="886"/>
    </location>
</feature>
<feature type="helix" evidence="29">
    <location>
        <begin position="890"/>
        <end position="897"/>
    </location>
</feature>
<feature type="strand" evidence="55">
    <location>
        <begin position="901"/>
        <end position="903"/>
    </location>
</feature>
<feature type="turn" evidence="29">
    <location>
        <begin position="904"/>
        <end position="906"/>
    </location>
</feature>
<feature type="turn" evidence="29">
    <location>
        <begin position="910"/>
        <end position="912"/>
    </location>
</feature>
<feature type="strand" evidence="47">
    <location>
        <begin position="913"/>
        <end position="915"/>
    </location>
</feature>
<feature type="helix" evidence="29">
    <location>
        <begin position="916"/>
        <end position="919"/>
    </location>
</feature>
<feature type="helix" evidence="29">
    <location>
        <begin position="923"/>
        <end position="946"/>
    </location>
</feature>
<feature type="turn" evidence="29">
    <location>
        <begin position="947"/>
        <end position="949"/>
    </location>
</feature>
<feature type="strand" evidence="29">
    <location>
        <begin position="953"/>
        <end position="958"/>
    </location>
</feature>
<feature type="helix" evidence="29">
    <location>
        <begin position="960"/>
        <end position="970"/>
    </location>
</feature>
<feature type="strand" evidence="48">
    <location>
        <begin position="975"/>
        <end position="977"/>
    </location>
</feature>
<feature type="strand" evidence="53">
    <location>
        <begin position="979"/>
        <end position="981"/>
    </location>
</feature>
<feature type="helix" evidence="29">
    <location>
        <begin position="983"/>
        <end position="994"/>
    </location>
</feature>
<feature type="helix" evidence="29">
    <location>
        <begin position="1005"/>
        <end position="1013"/>
    </location>
</feature>
<feature type="helix" evidence="29">
    <location>
        <begin position="1016"/>
        <end position="1025"/>
    </location>
</feature>
<feature type="helix" evidence="29">
    <location>
        <begin position="1028"/>
        <end position="1033"/>
    </location>
</feature>
<feature type="helix" evidence="29">
    <location>
        <begin position="1039"/>
        <end position="1056"/>
    </location>
</feature>
<feature type="helix" evidence="29">
    <location>
        <begin position="1064"/>
        <end position="1076"/>
    </location>
</feature>
<feature type="strand" evidence="52">
    <location>
        <begin position="1080"/>
        <end position="1083"/>
    </location>
</feature>
<feature type="turn" evidence="55">
    <location>
        <begin position="1084"/>
        <end position="1086"/>
    </location>
</feature>
<feature type="strand" evidence="48">
    <location>
        <begin position="1088"/>
        <end position="1090"/>
    </location>
</feature>
<feature type="helix" evidence="55">
    <location>
        <begin position="1092"/>
        <end position="1095"/>
    </location>
</feature>
<feature type="helix" evidence="29">
    <location>
        <begin position="1097"/>
        <end position="1104"/>
    </location>
</feature>
<feature type="turn" evidence="29">
    <location>
        <begin position="1105"/>
        <end position="1107"/>
    </location>
</feature>
<feature type="strand" evidence="29">
    <location>
        <begin position="1115"/>
        <end position="1120"/>
    </location>
</feature>
<feature type="strand" evidence="29">
    <location>
        <begin position="1122"/>
        <end position="1126"/>
    </location>
</feature>
<feature type="helix" evidence="29">
    <location>
        <begin position="1128"/>
        <end position="1138"/>
    </location>
</feature>
<feature type="helix" evidence="29">
    <location>
        <begin position="1143"/>
        <end position="1145"/>
    </location>
</feature>
<feature type="strand" evidence="29">
    <location>
        <begin position="1147"/>
        <end position="1154"/>
    </location>
</feature>
<feature type="strand" evidence="29">
    <location>
        <begin position="1158"/>
        <end position="1160"/>
    </location>
</feature>
<feature type="helix" evidence="29">
    <location>
        <begin position="1164"/>
        <end position="1166"/>
    </location>
</feature>
<feature type="helix" evidence="29">
    <location>
        <begin position="1167"/>
        <end position="1171"/>
    </location>
</feature>
<feature type="strand" evidence="27">
    <location>
        <begin position="1172"/>
        <end position="1174"/>
    </location>
</feature>
<feature type="turn" evidence="50">
    <location>
        <begin position="1175"/>
        <end position="1179"/>
    </location>
</feature>
<feature type="strand" evidence="50">
    <location>
        <begin position="1180"/>
        <end position="1182"/>
    </location>
</feature>
<feature type="helix" evidence="47">
    <location>
        <begin position="1185"/>
        <end position="1187"/>
    </location>
</feature>
<feature type="strand" evidence="29">
    <location>
        <begin position="1190"/>
        <end position="1197"/>
    </location>
</feature>
<feature type="helix" evidence="29">
    <location>
        <begin position="1199"/>
        <end position="1204"/>
    </location>
</feature>
<feature type="helix" evidence="29">
    <location>
        <begin position="1209"/>
        <end position="1220"/>
    </location>
</feature>
<feature type="helix" evidence="29">
    <location>
        <begin position="1221"/>
        <end position="1223"/>
    </location>
</feature>
<feature type="strand" evidence="29">
    <location>
        <begin position="1224"/>
        <end position="1228"/>
    </location>
</feature>
<feature type="strand" evidence="29">
    <location>
        <begin position="1233"/>
        <end position="1235"/>
    </location>
</feature>
<feature type="strand" evidence="29">
    <location>
        <begin position="1237"/>
        <end position="1242"/>
    </location>
</feature>
<feature type="turn" evidence="45">
    <location>
        <begin position="1245"/>
        <end position="1250"/>
    </location>
</feature>
<feature type="turn" evidence="43">
    <location>
        <begin position="1252"/>
        <end position="1255"/>
    </location>
</feature>
<feature type="helix" evidence="29">
    <location>
        <begin position="1258"/>
        <end position="1270"/>
    </location>
</feature>
<feature type="strand" evidence="29">
    <location>
        <begin position="1272"/>
        <end position="1275"/>
    </location>
</feature>
<feature type="strand" evidence="29">
    <location>
        <begin position="1282"/>
        <end position="1292"/>
    </location>
</feature>
<feature type="strand" evidence="29">
    <location>
        <begin position="1296"/>
        <end position="1310"/>
    </location>
</feature>
<feature type="helix" evidence="29">
    <location>
        <begin position="1313"/>
        <end position="1316"/>
    </location>
</feature>
<feature type="strand" evidence="41">
    <location>
        <begin position="1317"/>
        <end position="1319"/>
    </location>
</feature>
<feature type="strand" evidence="51">
    <location>
        <begin position="1320"/>
        <end position="1322"/>
    </location>
</feature>
<feature type="turn" evidence="29">
    <location>
        <begin position="1324"/>
        <end position="1326"/>
    </location>
</feature>
<feature type="strand" evidence="48">
    <location>
        <begin position="1328"/>
        <end position="1330"/>
    </location>
</feature>
<feature type="helix" evidence="29">
    <location>
        <begin position="1332"/>
        <end position="1339"/>
    </location>
</feature>
<feature type="helix" evidence="29">
    <location>
        <begin position="1341"/>
        <end position="1357"/>
    </location>
</feature>
<feature type="turn" evidence="29">
    <location>
        <begin position="1358"/>
        <end position="1360"/>
    </location>
</feature>
<feature type="helix" evidence="29">
    <location>
        <begin position="1365"/>
        <end position="1374"/>
    </location>
</feature>
<feature type="turn" evidence="29">
    <location>
        <begin position="1375"/>
        <end position="1377"/>
    </location>
</feature>
<feature type="strand" evidence="29">
    <location>
        <begin position="1378"/>
        <end position="1380"/>
    </location>
</feature>
<feature type="strand" evidence="29">
    <location>
        <begin position="1384"/>
        <end position="1386"/>
    </location>
</feature>
<feature type="strand" evidence="29">
    <location>
        <begin position="1388"/>
        <end position="1390"/>
    </location>
</feature>
<feature type="strand" evidence="48">
    <location>
        <begin position="1391"/>
        <end position="1394"/>
    </location>
</feature>
<feature type="helix" evidence="48">
    <location>
        <begin position="1396"/>
        <end position="1399"/>
    </location>
</feature>
<feature type="turn" evidence="48">
    <location>
        <begin position="1400"/>
        <end position="1402"/>
    </location>
</feature>
<feature type="helix" evidence="29">
    <location>
        <begin position="1406"/>
        <end position="1415"/>
    </location>
</feature>
<feature type="helix" evidence="29">
    <location>
        <begin position="1424"/>
        <end position="1429"/>
    </location>
</feature>
<feature type="helix" evidence="29">
    <location>
        <begin position="1437"/>
        <end position="1439"/>
    </location>
</feature>
<feature type="strand" evidence="29">
    <location>
        <begin position="1440"/>
        <end position="1445"/>
    </location>
</feature>
<feature type="helix" evidence="48">
    <location>
        <begin position="1447"/>
        <end position="1453"/>
    </location>
</feature>
<feature type="helix" evidence="40">
    <location>
        <begin position="1458"/>
        <end position="1460"/>
    </location>
</feature>
<feature type="helix" evidence="40">
    <location>
        <begin position="1463"/>
        <end position="1466"/>
    </location>
</feature>
<feature type="helix" evidence="39">
    <location>
        <begin position="1474"/>
        <end position="1476"/>
    </location>
</feature>
<feature type="strand" evidence="31">
    <location>
        <begin position="1677"/>
        <end position="1680"/>
    </location>
</feature>
<feature type="strand" evidence="38">
    <location>
        <begin position="1689"/>
        <end position="1691"/>
    </location>
</feature>
<sequence length="1733" mass="191612">MVGQQYSSAPLRTVKEVQFGLFSPEEVRAISVAKIRFPETMDETQTRAKIGGLNDPRLGSIDRNLKCQTCQEGMNECPGHFGHIDLAKPVFHVGFIAKIKKVCECVCMHCGKLLLDEHNELMRQALAIKDSKKRFAAIWTLCKTKMVCETDVPSEDDPTQLVSRGGCGNTQPTIRKDGLKLVGSWKKDRATGDADEPELRVLSTEEILNIFKHISVKDFTSLGFNEVFSRPEWMILTCLPVPPPPVRPSISFNESQRGEDDLTFKLADILKANISLETLEHNGAPHHAIEEAESLLQFHVATYMDNDIAGQPQALQKSGRPVKSIRARLKGKEGRIRGNLMGKRVDFSARTVISGDPNLELDQVGVPKSIAKTLTYPEVVTPYNIDRLTQLVRNGPNEHPGAKYVIRDSGDRIDLRYSKRAGDIQLQYGWKVERHIMDNDPVLFNRQPSLHKMSMMAHRVKVIPYSTFRLNLSVTSPYNADFDGDEMNLHVPQSEETRAELSQLCAVPLQIVSPQSNKPCMGIVQDTLCGIRKLTLRDTFIELDQVLNMLYWVPDWDGVIPTPAIIKPKPLWSGKQILSVAIPNGIHLQRFDEGTTLLSPKDNGMLIIDGQIIFGVVEKKTVGSSNGGLIHVVTREKGPQVCAKLFGNIQKVVNFWLLHNGFSTGIGDTIADGPTMREITETIAEAKKKVLDVTKEAQANLLTAKHGMTLRESFEDNVVRFLNEARDKAGRLAEVNLKDLNNVKQMVMAGSKGSFINIAQMSACVGQQSVEGKRIAFGFVDRTLPHFSKDDYSPESKGFVENSYLRGLTPQEFFFHAMGGREGLIDTAVKTAETGYIQRRLVKALEDIMVHYDNTTRNSLGNVIQFIYGEDGMDAAHIEKQSLDTIGGSDAAFEKRYRVDLLNTDHTLDPSLLESGSEILGDLKLQVLLDEEYKQLVKDRKFLREVFVDGEANWPLPVNIRRIIQNAQQTFHIDHTKPSDLTIKDIVLGVKDLQENLLVLRGKNEIIQNAQRDAVTLFCCLLRSRLATRRVLQEYRLTKQAFDWVLSNIEAQFLRSVVHPGEMVGVLAAQSIGEPATQMTLNTFHFAGVASKKVTSGVPRLKEILNVAKNMKTPSLTVYLEPGHAADQEQAKLIRSAIEHTTLKSVTIASEIYYDPDPRSTVIPEDEEIIQLHFSLLDEEAEQSFDQQSPWLLRLELDRAAMNDKDLTMGQVGERIKQTFKNDLFVIWSEDNDEKLIIRCRVVRPKSLDAETEAEEDHMLKKIENTMLENITLRGVENIERVVMMKYDRKVPSPTGEYVKEPEWVLETDGVNLSEVMTVPGIDPTRIYTNSFIDIMEVLGIEAGRAALYKEVYNVIASDGSYVNYRHMALLVDVMTTQGGLTSVTRHGFNRSNTGALMRCSFEETVEILFEAGASAELDDCRGVSENVILGQMAPIGTGAFDVMIDEESLVKYMPEQKITEIEDGQDGGVTPYSNESGLVNADLDVKDELMFSPLVDSGSNDAMAGGFTAYGGADYGEATSPFGAYGEAPTSPGFGVSSPGFSPTSPTYSPTSPAYSPTSPSYSPTSPSYSPTSPSYSPTSPSYSPTSPSYSPTSPSYSPTSPSYSPTSPSYSPTSPSYSPTSPSYSPTSPSYSPTSPSYSPTSPSYSPTSPSYSPTSPAYSPTSPSYSPTSPSYSPTSPSYSPTSPSYSPTSPNYSPTSPSYSPTSPGYSPGSPAYSPKQDEQKHNENENSR</sequence>
<evidence type="ECO:0000256" key="1">
    <source>
        <dbReference type="SAM" id="MobiDB-lite"/>
    </source>
</evidence>
<evidence type="ECO:0000269" key="2">
    <source>
    </source>
</evidence>
<evidence type="ECO:0000269" key="3">
    <source>
    </source>
</evidence>
<evidence type="ECO:0000269" key="4">
    <source>
    </source>
</evidence>
<evidence type="ECO:0000269" key="5">
    <source>
    </source>
</evidence>
<evidence type="ECO:0000269" key="6">
    <source>
    </source>
</evidence>
<evidence type="ECO:0000269" key="7">
    <source>
    </source>
</evidence>
<evidence type="ECO:0000269" key="8">
    <source>
    </source>
</evidence>
<evidence type="ECO:0000269" key="9">
    <source>
    </source>
</evidence>
<evidence type="ECO:0000269" key="10">
    <source>
    </source>
</evidence>
<evidence type="ECO:0000269" key="11">
    <source>
    </source>
</evidence>
<evidence type="ECO:0000269" key="12">
    <source>
    </source>
</evidence>
<evidence type="ECO:0000269" key="13">
    <source>
    </source>
</evidence>
<evidence type="ECO:0000269" key="14">
    <source>
    </source>
</evidence>
<evidence type="ECO:0000269" key="15">
    <source>
    </source>
</evidence>
<evidence type="ECO:0000269" key="16">
    <source>
    </source>
</evidence>
<evidence type="ECO:0000269" key="17">
    <source>
    </source>
</evidence>
<evidence type="ECO:0000269" key="18">
    <source>
    </source>
</evidence>
<evidence type="ECO:0000269" key="19">
    <source>
    </source>
</evidence>
<evidence type="ECO:0000305" key="20"/>
<evidence type="ECO:0000305" key="21">
    <source>
    </source>
</evidence>
<evidence type="ECO:0007744" key="22">
    <source>
        <dbReference type="PDB" id="4BBR"/>
    </source>
</evidence>
<evidence type="ECO:0007744" key="23">
    <source>
        <dbReference type="PDB" id="4V1M"/>
    </source>
</evidence>
<evidence type="ECO:0007744" key="24">
    <source>
    </source>
</evidence>
<evidence type="ECO:0007744" key="25">
    <source>
    </source>
</evidence>
<evidence type="ECO:0007829" key="26">
    <source>
        <dbReference type="PDB" id="1I3Q"/>
    </source>
</evidence>
<evidence type="ECO:0007829" key="27">
    <source>
        <dbReference type="PDB" id="1I50"/>
    </source>
</evidence>
<evidence type="ECO:0007829" key="28">
    <source>
        <dbReference type="PDB" id="1K83"/>
    </source>
</evidence>
<evidence type="ECO:0007829" key="29">
    <source>
        <dbReference type="PDB" id="1TWF"/>
    </source>
</evidence>
<evidence type="ECO:0007829" key="30">
    <source>
        <dbReference type="PDB" id="2E2I"/>
    </source>
</evidence>
<evidence type="ECO:0007829" key="31">
    <source>
        <dbReference type="PDB" id="2LO6"/>
    </source>
</evidence>
<evidence type="ECO:0007829" key="32">
    <source>
        <dbReference type="PDB" id="2NVQ"/>
    </source>
</evidence>
<evidence type="ECO:0007829" key="33">
    <source>
        <dbReference type="PDB" id="3CQZ"/>
    </source>
</evidence>
<evidence type="ECO:0007829" key="34">
    <source>
        <dbReference type="PDB" id="3PO2"/>
    </source>
</evidence>
<evidence type="ECO:0007829" key="35">
    <source>
        <dbReference type="PDB" id="3S14"/>
    </source>
</evidence>
<evidence type="ECO:0007829" key="36">
    <source>
        <dbReference type="PDB" id="3S1N"/>
    </source>
</evidence>
<evidence type="ECO:0007829" key="37">
    <source>
        <dbReference type="PDB" id="3S2H"/>
    </source>
</evidence>
<evidence type="ECO:0007829" key="38">
    <source>
        <dbReference type="PDB" id="5M9D"/>
    </source>
</evidence>
<evidence type="ECO:0007829" key="39">
    <source>
        <dbReference type="PDB" id="5VKO"/>
    </source>
</evidence>
<evidence type="ECO:0007829" key="40">
    <source>
        <dbReference type="PDB" id="6O6C"/>
    </source>
</evidence>
<evidence type="ECO:0007829" key="41">
    <source>
        <dbReference type="PDB" id="6UPZ"/>
    </source>
</evidence>
<evidence type="ECO:0007829" key="42">
    <source>
        <dbReference type="PDB" id="7NKX"/>
    </source>
</evidence>
<evidence type="ECO:0007829" key="43">
    <source>
        <dbReference type="PDB" id="7O4J"/>
    </source>
</evidence>
<evidence type="ECO:0007829" key="44">
    <source>
        <dbReference type="PDB" id="7RIM"/>
    </source>
</evidence>
<evidence type="ECO:0007829" key="45">
    <source>
        <dbReference type="PDB" id="7RIQ"/>
    </source>
</evidence>
<evidence type="ECO:0007829" key="46">
    <source>
        <dbReference type="PDB" id="7RIW"/>
    </source>
</evidence>
<evidence type="ECO:0007829" key="47">
    <source>
        <dbReference type="PDB" id="7ZS9"/>
    </source>
</evidence>
<evidence type="ECO:0007829" key="48">
    <source>
        <dbReference type="PDB" id="8JCH"/>
    </source>
</evidence>
<evidence type="ECO:0007829" key="49">
    <source>
        <dbReference type="PDB" id="8RAM"/>
    </source>
</evidence>
<evidence type="ECO:0007829" key="50">
    <source>
        <dbReference type="PDB" id="8TVY"/>
    </source>
</evidence>
<evidence type="ECO:0007829" key="51">
    <source>
        <dbReference type="PDB" id="8U9R"/>
    </source>
</evidence>
<evidence type="ECO:0007829" key="52">
    <source>
        <dbReference type="PDB" id="8U9X"/>
    </source>
</evidence>
<evidence type="ECO:0007829" key="53">
    <source>
        <dbReference type="PDB" id="8UKQ"/>
    </source>
</evidence>
<evidence type="ECO:0007829" key="54">
    <source>
        <dbReference type="PDB" id="8UKS"/>
    </source>
</evidence>
<evidence type="ECO:0007829" key="55">
    <source>
        <dbReference type="PDB" id="9JA1"/>
    </source>
</evidence>
<gene>
    <name type="primary">RPO21</name>
    <name type="synonym">RPB1</name>
    <name type="synonym">RPB220</name>
    <name type="synonym">SUA8</name>
    <name type="ordered locus">YDL140C</name>
    <name type="ORF">D2150</name>
</gene>
<reference key="1">
    <citation type="journal article" date="1985" name="Cell">
        <title>Extensive homology among the largest subunits of eukaryotic and prokaryotic RNA polymerases.</title>
        <authorList>
            <person name="Allison L.A."/>
            <person name="Moyle M."/>
            <person name="Shales M."/>
            <person name="Ingles C.J."/>
        </authorList>
    </citation>
    <scope>NUCLEOTIDE SEQUENCE [GENOMIC DNA]</scope>
    <source>
        <strain>ATCC 204626 / S288c / A364A</strain>
    </source>
</reference>
<reference key="2">
    <citation type="journal article" date="1996" name="Yeast">
        <title>Analysis of a 26,756 bp segment from the left arm of yeast chromosome IV.</title>
        <authorList>
            <person name="Woelfl S."/>
            <person name="Haneman V."/>
            <person name="Saluz H.P."/>
        </authorList>
    </citation>
    <scope>NUCLEOTIDE SEQUENCE [GENOMIC DNA]</scope>
    <source>
        <strain>ATCC 96604 / S288c / FY1679</strain>
    </source>
</reference>
<reference key="3">
    <citation type="journal article" date="1997" name="Nature">
        <title>The nucleotide sequence of Saccharomyces cerevisiae chromosome IV.</title>
        <authorList>
            <person name="Jacq C."/>
            <person name="Alt-Moerbe J."/>
            <person name="Andre B."/>
            <person name="Arnold W."/>
            <person name="Bahr A."/>
            <person name="Ballesta J.P.G."/>
            <person name="Bargues M."/>
            <person name="Baron L."/>
            <person name="Becker A."/>
            <person name="Biteau N."/>
            <person name="Bloecker H."/>
            <person name="Blugeon C."/>
            <person name="Boskovic J."/>
            <person name="Brandt P."/>
            <person name="Brueckner M."/>
            <person name="Buitrago M.J."/>
            <person name="Coster F."/>
            <person name="Delaveau T."/>
            <person name="del Rey F."/>
            <person name="Dujon B."/>
            <person name="Eide L.G."/>
            <person name="Garcia-Cantalejo J.M."/>
            <person name="Goffeau A."/>
            <person name="Gomez-Peris A."/>
            <person name="Granotier C."/>
            <person name="Hanemann V."/>
            <person name="Hankeln T."/>
            <person name="Hoheisel J.D."/>
            <person name="Jaeger W."/>
            <person name="Jimenez A."/>
            <person name="Jonniaux J.-L."/>
            <person name="Kraemer C."/>
            <person name="Kuester H."/>
            <person name="Laamanen P."/>
            <person name="Legros Y."/>
            <person name="Louis E.J."/>
            <person name="Moeller-Rieker S."/>
            <person name="Monnet A."/>
            <person name="Moro M."/>
            <person name="Mueller-Auer S."/>
            <person name="Nussbaumer B."/>
            <person name="Paricio N."/>
            <person name="Paulin L."/>
            <person name="Perea J."/>
            <person name="Perez-Alonso M."/>
            <person name="Perez-Ortin J.E."/>
            <person name="Pohl T.M."/>
            <person name="Prydz H."/>
            <person name="Purnelle B."/>
            <person name="Rasmussen S.W."/>
            <person name="Remacha M.A."/>
            <person name="Revuelta J.L."/>
            <person name="Rieger M."/>
            <person name="Salom D."/>
            <person name="Saluz H.P."/>
            <person name="Saiz J.E."/>
            <person name="Saren A.-M."/>
            <person name="Schaefer M."/>
            <person name="Scharfe M."/>
            <person name="Schmidt E.R."/>
            <person name="Schneider C."/>
            <person name="Scholler P."/>
            <person name="Schwarz S."/>
            <person name="Soler-Mira A."/>
            <person name="Urrestarazu L.A."/>
            <person name="Verhasselt P."/>
            <person name="Vissers S."/>
            <person name="Voet M."/>
            <person name="Volckaert G."/>
            <person name="Wagner G."/>
            <person name="Wambutt R."/>
            <person name="Wedler E."/>
            <person name="Wedler H."/>
            <person name="Woelfl S."/>
            <person name="Harris D.E."/>
            <person name="Bowman S."/>
            <person name="Brown D."/>
            <person name="Churcher C.M."/>
            <person name="Connor R."/>
            <person name="Dedman K."/>
            <person name="Gentles S."/>
            <person name="Hamlin N."/>
            <person name="Hunt S."/>
            <person name="Jones L."/>
            <person name="McDonald S."/>
            <person name="Murphy L.D."/>
            <person name="Niblett D."/>
            <person name="Odell C."/>
            <person name="Oliver K."/>
            <person name="Rajandream M.A."/>
            <person name="Richards C."/>
            <person name="Shore L."/>
            <person name="Walsh S.V."/>
            <person name="Barrell B.G."/>
            <person name="Dietrich F.S."/>
            <person name="Mulligan J.T."/>
            <person name="Allen E."/>
            <person name="Araujo R."/>
            <person name="Aviles E."/>
            <person name="Berno A."/>
            <person name="Carpenter J."/>
            <person name="Chen E."/>
            <person name="Cherry J.M."/>
            <person name="Chung E."/>
            <person name="Duncan M."/>
            <person name="Hunicke-Smith S."/>
            <person name="Hyman R.W."/>
            <person name="Komp C."/>
            <person name="Lashkari D."/>
            <person name="Lew H."/>
            <person name="Lin D."/>
            <person name="Mosedale D."/>
            <person name="Nakahara K."/>
            <person name="Namath A."/>
            <person name="Oefner P."/>
            <person name="Oh C."/>
            <person name="Petel F.X."/>
            <person name="Roberts D."/>
            <person name="Schramm S."/>
            <person name="Schroeder M."/>
            <person name="Shogren T."/>
            <person name="Shroff N."/>
            <person name="Winant A."/>
            <person name="Yelton M.A."/>
            <person name="Botstein D."/>
            <person name="Davis R.W."/>
            <person name="Johnston M."/>
            <person name="Andrews S."/>
            <person name="Brinkman R."/>
            <person name="Cooper J."/>
            <person name="Ding H."/>
            <person name="Du Z."/>
            <person name="Favello A."/>
            <person name="Fulton L."/>
            <person name="Gattung S."/>
            <person name="Greco T."/>
            <person name="Hallsworth K."/>
            <person name="Hawkins J."/>
            <person name="Hillier L.W."/>
            <person name="Jier M."/>
            <person name="Johnson D."/>
            <person name="Johnston L."/>
            <person name="Kirsten J."/>
            <person name="Kucaba T."/>
            <person name="Langston Y."/>
            <person name="Latreille P."/>
            <person name="Le T."/>
            <person name="Mardis E."/>
            <person name="Menezes S."/>
            <person name="Miller N."/>
            <person name="Nhan M."/>
            <person name="Pauley A."/>
            <person name="Peluso D."/>
            <person name="Rifkin L."/>
            <person name="Riles L."/>
            <person name="Taich A."/>
            <person name="Trevaskis E."/>
            <person name="Vignati D."/>
            <person name="Wilcox L."/>
            <person name="Wohldman P."/>
            <person name="Vaudin M."/>
            <person name="Wilson R."/>
            <person name="Waterston R."/>
            <person name="Albermann K."/>
            <person name="Hani J."/>
            <person name="Heumann K."/>
            <person name="Kleine K."/>
            <person name="Mewes H.-W."/>
            <person name="Zollner A."/>
            <person name="Zaccaria P."/>
        </authorList>
    </citation>
    <scope>NUCLEOTIDE SEQUENCE [LARGE SCALE GENOMIC DNA]</scope>
    <source>
        <strain>ATCC 204508 / S288c</strain>
    </source>
</reference>
<reference key="4">
    <citation type="journal article" date="2014" name="G3 (Bethesda)">
        <title>The reference genome sequence of Saccharomyces cerevisiae: Then and now.</title>
        <authorList>
            <person name="Engel S.R."/>
            <person name="Dietrich F.S."/>
            <person name="Fisk D.G."/>
            <person name="Binkley G."/>
            <person name="Balakrishnan R."/>
            <person name="Costanzo M.C."/>
            <person name="Dwight S.S."/>
            <person name="Hitz B.C."/>
            <person name="Karra K."/>
            <person name="Nash R.S."/>
            <person name="Weng S."/>
            <person name="Wong E.D."/>
            <person name="Lloyd P."/>
            <person name="Skrzypek M.S."/>
            <person name="Miyasato S.R."/>
            <person name="Simison M."/>
            <person name="Cherry J.M."/>
        </authorList>
    </citation>
    <scope>GENOME REANNOTATION</scope>
    <source>
        <strain>ATCC 204508 / S288c</strain>
    </source>
</reference>
<reference key="5">
    <citation type="journal article" date="1995" name="FEMS Microbiol. Lett.">
        <title>The gene encoding the biotin-apoprotein ligase of Saccharomyces cerevisiae.</title>
        <authorList>
            <person name="Cronan J.E. Jr."/>
            <person name="Wallace J.C."/>
        </authorList>
    </citation>
    <scope>NUCLEOTIDE SEQUENCE [GENOMIC DNA] OF 1669-1733</scope>
    <source>
        <strain>ATCC 204508 / S288c</strain>
    </source>
</reference>
<reference key="6">
    <citation type="journal article" date="1995" name="Genetics">
        <title>Construction and analysis of yeast RNA polymerase II CTD deletion and substitution mutations.</title>
        <authorList>
            <person name="West M.L."/>
            <person name="Corden J.L."/>
        </authorList>
    </citation>
    <scope>MUTAGENESIS OF THE CTD</scope>
</reference>
<reference key="7">
    <citation type="journal article" date="1998" name="Mol. Cell">
        <title>Temporal regulation of RNA polymerase II by Srb10 and Kin28 cyclin-dependent kinases.</title>
        <authorList>
            <person name="Hengartner C.J."/>
            <person name="Myer V.E."/>
            <person name="Liao S.-M."/>
            <person name="Wilson C.J."/>
            <person name="Koh S.S."/>
            <person name="Young R.A."/>
        </authorList>
    </citation>
    <scope>PHOSPHORYLATION BY THE TFIIK COMPLEX AND THE SRB8-11 COMPLEX</scope>
</reference>
<reference key="8">
    <citation type="journal article" date="1999" name="J. Biol. Chem.">
        <title>Phospho-carboxyl-terminal domain binding and the role of a prolyl isomerase in pre-mRNA 3'-End formation.</title>
        <authorList>
            <person name="Morris D.P."/>
            <person name="Phatnani H.P."/>
            <person name="Greenleaf A.L."/>
        </authorList>
    </citation>
    <scope>INTERACTION WITH ESS1</scope>
</reference>
<reference key="9">
    <citation type="journal article" date="1999" name="Mol. Cell">
        <title>An unusual eukaryotic protein phosphatase required for transcription by RNA polymerase II and CTD dephosphorylation in S. cerevisiae.</title>
        <authorList>
            <person name="Kobor M.S."/>
            <person name="Archambault J."/>
            <person name="Lester W."/>
            <person name="Holstege F.C.P."/>
            <person name="Gileadi O."/>
            <person name="Jansma D.B."/>
            <person name="Jennings E.G."/>
            <person name="Kouyoumdjian F."/>
            <person name="Davidson A.R."/>
            <person name="Young R.A."/>
            <person name="Greenblatt J."/>
        </authorList>
    </citation>
    <scope>DEPHOSPHORYLATION BY FCP1</scope>
</reference>
<reference key="10">
    <citation type="journal article" date="2001" name="Mol. Cell. Biol.">
        <title>Phosphorylation of the RNA polymerase II carboxy-terminal domain by the Bur1 cyclin-dependent kinase.</title>
        <authorList>
            <person name="Murray S."/>
            <person name="Udupa R."/>
            <person name="Yao S."/>
            <person name="Hartzog G."/>
            <person name="Prelich G."/>
        </authorList>
    </citation>
    <scope>PHOSPHORYLATION BY THE BUR KINASE COMPLEX</scope>
</reference>
<reference key="11">
    <citation type="journal article" date="2002" name="Nature">
        <title>A Rad26-Def1 complex coordinates repair and RNA pol II proteolysis in response to DNA damage.</title>
        <authorList>
            <person name="Woudstra E.C."/>
            <person name="Gilbert C."/>
            <person name="Fellows J."/>
            <person name="Jansen L."/>
            <person name="Brouwer J."/>
            <person name="Erdjument-Bromage H."/>
            <person name="Tempst P."/>
            <person name="Svejstrup J.Q."/>
        </authorList>
    </citation>
    <scope>UBIQUITINATION</scope>
</reference>
<reference key="12">
    <citation type="journal article" date="2003" name="Eukaryot. Cell">
        <title>Ask10p mediates the oxidative stress-induced destruction of the Saccharomyces cerevisiae C-type cyclin Ume3p/Srb11p.</title>
        <authorList>
            <person name="Cohen T.J."/>
            <person name="Lee K."/>
            <person name="Rutkowski L.H."/>
            <person name="Strich R."/>
        </authorList>
    </citation>
    <scope>INTERACTION WITH ASK10</scope>
</reference>
<reference key="13">
    <citation type="journal article" date="2003" name="Nature">
        <title>Global analysis of protein localization in budding yeast.</title>
        <authorList>
            <person name="Huh W.-K."/>
            <person name="Falvo J.V."/>
            <person name="Gerke L.C."/>
            <person name="Carroll A.S."/>
            <person name="Howson R.W."/>
            <person name="Weissman J.S."/>
            <person name="O'Shea E.K."/>
        </authorList>
    </citation>
    <scope>SUBCELLULAR LOCATION [LARGE SCALE ANALYSIS]</scope>
</reference>
<reference key="14">
    <citation type="journal article" date="2003" name="Proc. Natl. Acad. Sci. U.S.A.">
        <title>A subset of membrane-associated proteins is ubiquitinated in response to mutations in the endoplasmic reticulum degradation machinery.</title>
        <authorList>
            <person name="Hitchcock A.L."/>
            <person name="Auld K."/>
            <person name="Gygi S.P."/>
            <person name="Silver P.A."/>
        </authorList>
    </citation>
    <scope>UBIQUITINATION [LARGE SCALE ANALYSIS] AT LYS-695</scope>
    <scope>IDENTIFICATION BY MASS SPECTROMETRY</scope>
</reference>
<reference key="15">
    <citation type="journal article" date="2004" name="J. Biol. Chem.">
        <title>C-terminal repeat domain kinase I phosphorylates Ser2 and Ser5 of RNA polymerase II C-terminal domain repeats.</title>
        <authorList>
            <person name="Jones J.C."/>
            <person name="Phatnani H.P."/>
            <person name="Haystead T.A."/>
            <person name="MacDonald J.A."/>
            <person name="Alam S.M."/>
            <person name="Greenleaf A.L."/>
        </authorList>
    </citation>
    <scope>PHOSPHORYLATION BY CTD KINASE</scope>
</reference>
<reference key="16">
    <citation type="journal article" date="2004" name="J. Biol. Chem.">
        <title>DNA damage-induced Def1-RNA polymerase II interaction and Def1 requirement for polymerase ubiquitylation in vitro.</title>
        <authorList>
            <person name="Reid J."/>
            <person name="Svejstrup J.Q."/>
        </authorList>
    </citation>
    <scope>UBIQUITINATION</scope>
</reference>
<reference key="17">
    <citation type="journal article" date="2004" name="Nature">
        <title>The yeast Rat1 exonuclease promotes transcription termination by RNA polymerase II.</title>
        <authorList>
            <person name="Kim M."/>
            <person name="Krogan N.J."/>
            <person name="Vasiljeva L."/>
            <person name="Rando O.J."/>
            <person name="Nedea E."/>
            <person name="Greenblatt J.F."/>
            <person name="Buratowski S."/>
        </authorList>
    </citation>
    <scope>INTERACTION WITH RTT103</scope>
</reference>
<reference key="18">
    <citation type="journal article" date="2005" name="Cell">
        <title>Multiple mechanisms confining RNA polymerase II ubiquitylation to polymerases undergoing transcriptional arrest.</title>
        <authorList>
            <person name="Somesh B.P."/>
            <person name="Reid J."/>
            <person name="Liu W.F."/>
            <person name="Sogaard T.M."/>
            <person name="Erdjument-Bromage H."/>
            <person name="Tempst P."/>
            <person name="Svejstrup J.Q."/>
        </authorList>
    </citation>
    <scope>UBIQUITINATION</scope>
</reference>
<reference key="19">
    <citation type="journal article" date="2007" name="J. Proteome Res.">
        <title>Large-scale phosphorylation analysis of alpha-factor-arrested Saccharomyces cerevisiae.</title>
        <authorList>
            <person name="Li X."/>
            <person name="Gerber S.A."/>
            <person name="Rudner A.D."/>
            <person name="Beausoleil S.A."/>
            <person name="Haas W."/>
            <person name="Villen J."/>
            <person name="Elias J.E."/>
            <person name="Gygi S.P."/>
        </authorList>
    </citation>
    <scope>IDENTIFICATION BY MASS SPECTROMETRY [LARGE SCALE ANALYSIS]</scope>
    <source>
        <strain>ADR376</strain>
    </source>
</reference>
<reference key="20">
    <citation type="journal article" date="2008" name="Mol. Cell. Proteomics">
        <title>A multidimensional chromatography technology for in-depth phosphoproteome analysis.</title>
        <authorList>
            <person name="Albuquerque C.P."/>
            <person name="Smolka M.B."/>
            <person name="Payne S.H."/>
            <person name="Bafna V."/>
            <person name="Eng J."/>
            <person name="Zhou H."/>
        </authorList>
    </citation>
    <scope>PHOSPHORYLATION [LARGE SCALE ANALYSIS] AT THR-1471</scope>
    <scope>IDENTIFICATION BY MASS SPECTROMETRY [LARGE SCALE ANALYSIS]</scope>
</reference>
<reference key="21">
    <citation type="journal article" date="2009" name="Proc. Natl. Acad. Sci. U.S.A.">
        <title>Distinct ubiquitin ligases act sequentially for RNA polymerase II polyubiquitylation.</title>
        <authorList>
            <person name="Harreman M."/>
            <person name="Taschner M."/>
            <person name="Sigurdsson S."/>
            <person name="Anindya R."/>
            <person name="Reid J."/>
            <person name="Somesh B."/>
            <person name="Kong S.E."/>
            <person name="Banks C.A."/>
            <person name="Conaway R.C."/>
            <person name="Conaway J.W."/>
            <person name="Svejstrup J.Q."/>
        </authorList>
    </citation>
    <scope>UBIQUITINATION</scope>
</reference>
<reference key="22">
    <citation type="journal article" date="2010" name="Genes Dev.">
        <title>Cotranscriptional recruitment of She2p by RNA pol II elongation factor Spt4-Spt5/DSIF promotes mRNA localization to the yeast bud.</title>
        <authorList>
            <person name="Shen Z."/>
            <person name="St-Denis A."/>
            <person name="Chartrand P."/>
        </authorList>
    </citation>
    <scope>INTERACTION WITH SHE2</scope>
</reference>
<reference key="23">
    <citation type="journal article" date="2012" name="Proteomics">
        <title>Sites of ubiquitin attachment in Saccharomyces cerevisiae.</title>
        <authorList>
            <person name="Starita L.M."/>
            <person name="Lo R.S."/>
            <person name="Eng J.K."/>
            <person name="von Haller P.D."/>
            <person name="Fields S."/>
        </authorList>
    </citation>
    <scope>UBIQUITINATION [LARGE SCALE ANALYSIS] AT LYS-695; LYS-1246 AND LYS-1350</scope>
    <scope>IDENTIFICATION BY MASS SPECTROMETRY [LARGE SCALE ANALYSIS]</scope>
</reference>
<reference key="24">
    <citation type="journal article" date="2013" name="Cell">
        <title>Proteasome-mediated processing of Def1, a critical step in the cellular response to transcription stress.</title>
        <authorList>
            <person name="Wilson M.D."/>
            <person name="Harreman M."/>
            <person name="Taschner M."/>
            <person name="Reid J."/>
            <person name="Walker J."/>
            <person name="Erdjument-Bromage H."/>
            <person name="Tempst P."/>
            <person name="Svejstrup J.Q."/>
        </authorList>
    </citation>
    <scope>INTERACTION WITH DEF1; ELA1 AND ELC1</scope>
</reference>
<reference key="25">
    <citation type="journal article" date="2020" name="Cell">
        <title>Regulation of the RNAPII Pool Is Integral to the DNA Damage Response.</title>
        <authorList>
            <person name="Tufegdzic Vidakovic A."/>
            <person name="Mitter R."/>
            <person name="Kelly G.P."/>
            <person name="Neumann M."/>
            <person name="Harreman M."/>
            <person name="Rodriguez-Martinez M."/>
            <person name="Herlihy A."/>
            <person name="Weems J.C."/>
            <person name="Boeing S."/>
            <person name="Encheva V."/>
            <person name="Gaul L."/>
            <person name="Milligan L."/>
            <person name="Tollervey D."/>
            <person name="Conaway R.C."/>
            <person name="Conaway J.W."/>
            <person name="Snijders A.P."/>
            <person name="Stewart A."/>
            <person name="Svejstrup J.Q."/>
        </authorList>
    </citation>
    <scope>UBIQUITINATION AT LYS-1246</scope>
    <scope>MUTAGENESIS OF LYS-1246</scope>
</reference>
<reference key="26">
    <citation type="journal article" date="2003" name="Mol. Cell">
        <title>RNA polymerase II/TFIIF structure and conserved organization of the initiation complex.</title>
        <authorList>
            <person name="Chung W.H."/>
            <person name="Craighead J.L."/>
            <person name="Chang W.H."/>
            <person name="Ezeokonkwo C."/>
            <person name="Bareket-Samish A."/>
            <person name="Kornberg R.D."/>
            <person name="Asturias F.J."/>
        </authorList>
    </citation>
    <scope>ELECTRON MICROSCOPY OF THE RNA POL II/TFIIF COMPLEX</scope>
</reference>
<reference key="27">
    <citation type="journal article" date="2001" name="Science">
        <title>Structural basis of transcription: RNA polymerase II at 2.8 A resolution.</title>
        <authorList>
            <person name="Cramer P."/>
            <person name="Bushnell D.A."/>
            <person name="Kornberg R.D."/>
        </authorList>
    </citation>
    <scope>X-RAY CRYSTALLOGRAPHY (2.8 ANGSTROMS) OF THE RNA POL II CORE COMPLEX</scope>
</reference>
<reference key="28">
    <citation type="journal article" date="2001" name="Science">
        <title>Structural basis of transcription: an RNA polymerase II elongation complex at 3.3 A resolution.</title>
        <authorList>
            <person name="Gnatt A.L."/>
            <person name="Cramer P."/>
            <person name="Fu J."/>
            <person name="Bushnell D.A."/>
            <person name="Kornberg R.D."/>
        </authorList>
    </citation>
    <scope>X-RAY CRYSTALLOGRAPHY (3.3 ANGSTROMS) OF THE RNA POL II CORE COMPLEX</scope>
</reference>
<reference key="29">
    <citation type="journal article" date="2002" name="Proc. Natl. Acad. Sci. U.S.A.">
        <title>Structural basis of transcription: alpha-amanitin-RNA polymerase II cocrystal at 2.8 A resolution.</title>
        <authorList>
            <person name="Bushnell D.A."/>
            <person name="Cramer P."/>
            <person name="Kornberg R.D."/>
        </authorList>
    </citation>
    <scope>X-RAY CRYSTALLOGRAPHY (2.8 ANGSTROMS) OF THE RNA POL II CORE COMPLEX IN COMPLEX WITH ALPHA-AMANITIN</scope>
</reference>
<reference key="30">
    <citation type="journal article" date="2003" name="Cell">
        <title>Architecture of the RNA polymerase II-TFIIS complex and implications for mRNA cleavage.</title>
        <authorList>
            <person name="Kettenberger H."/>
            <person name="Armache K.J."/>
            <person name="Cramer P."/>
        </authorList>
    </citation>
    <scope>X-RAY CRYSTALLOGRAPHY (3.8 ANGSTROMS) OF THE RNA POL II COMPLEX IN COMPLEX WITH DST1</scope>
</reference>
<reference key="31">
    <citation type="journal article" date="2003" name="Proc. Natl. Acad. Sci. U.S.A.">
        <title>Architecture of initiation-competent 12-subunit RNA polymerase II.</title>
        <authorList>
            <person name="Armache K.J."/>
            <person name="Kettenberger H."/>
            <person name="Cramer P."/>
        </authorList>
    </citation>
    <scope>X-RAY CRYSTALLOGRAPHY (4.2 ANGSTROMS) OF THE RNA POL II COMPLEX</scope>
</reference>
<reference key="32">
    <citation type="journal article" date="2003" name="Proc. Natl. Acad. Sci. U.S.A.">
        <title>Complete, 12-subunit RNA polymerase II at 4.1-A resolution: implications for the initiation of transcription.</title>
        <authorList>
            <person name="Bushnell D.A."/>
            <person name="Kornberg R.D."/>
        </authorList>
    </citation>
    <scope>X-RAY CRYSTALLOGRAPHY (4.1 ANGSTROMS) OF THE RNA POL II CORE COMPLEX</scope>
</reference>
<reference key="33">
    <citation type="journal article" date="2004" name="Cell">
        <title>Structural basis of transcription: nucleotide selection by rotation in the RNA polymerase II active center.</title>
        <authorList>
            <person name="Westover K.D."/>
            <person name="Bushnell D.A."/>
            <person name="Kornberg R.D."/>
        </authorList>
    </citation>
    <scope>X-RAY CRYSTALLOGRAPHY (2.3 ANGSTROMS) OF THE RNA POL II CORE COMPLEX</scope>
</reference>
<reference key="34">
    <citation type="journal article" date="2004" name="Mol. Cell">
        <title>Complete RNA polymerase II elongation complex structure and its interactions with NTP and TFIIS.</title>
        <authorList>
            <person name="Kettenberger H."/>
            <person name="Armache K.J."/>
            <person name="Cramer P."/>
        </authorList>
    </citation>
    <scope>X-RAY CRYSTALLOGRAPHY (4.5 ANGSTROMS)</scope>
</reference>
<reference key="35">
    <citation type="journal article" date="2004" name="Science">
        <title>Structural basis of transcription: an RNA polymerase II-TFIIB cocrystal at 4.5 Angstroms.</title>
        <authorList>
            <person name="Bushnell D.A."/>
            <person name="Westover K.D."/>
            <person name="Davis R.E."/>
            <person name="Kornberg R.D."/>
        </authorList>
    </citation>
    <scope>X-RAY CRYSTALLOGRAPHY (4.5 ANGSTROMS) OF THE RNA POL II CORE COMPLEX</scope>
</reference>
<reference key="36">
    <citation type="journal article" date="2005" name="J. Biol. Chem.">
        <title>Structures of complete RNA polymerase II and its subcomplex, Rpb4/7.</title>
        <authorList>
            <person name="Armache K.J."/>
            <person name="Mitterweger S."/>
            <person name="Meinhart A."/>
            <person name="Cramer P."/>
        </authorList>
    </citation>
    <scope>X-RAY CRYSTALLOGRAPHY (3.8 ANGSTROMS) OF THE RNA POL II COMPLEX</scope>
</reference>
<reference key="37">
    <citation type="journal article" date="2006" name="Nat. Struct. Mol. Biol.">
        <title>Structure of an RNA polymerase II-RNA inhibitor complex elucidates transcription regulation by noncoding RNAs.</title>
        <authorList>
            <person name="Kettenberger H."/>
            <person name="Eisenfuhr A."/>
            <person name="Brueckner F."/>
            <person name="Theis M."/>
            <person name="Famulok M."/>
            <person name="Cramer P."/>
        </authorList>
    </citation>
    <scope>X-RAY CRYSTALLOGRAPHY (3.8 ANGSTROMS) OF THE RNA POL II COMPLEX IN COMPLEX WITH INHIBITING NON-CODING RNA</scope>
</reference>
<reference key="38">
    <citation type="journal article" date="2006" name="Structure">
        <title>Phasing RNA polymerase II using intrinsically bound Zn atoms: an updated structural model.</title>
        <authorList>
            <person name="Meyer P.A."/>
            <person name="Ye P."/>
            <person name="Zhang M."/>
            <person name="Suh M.H."/>
            <person name="Fu J."/>
        </authorList>
    </citation>
    <scope>X-RAY CRYSTALLOGRAPHY (4.15 ANGSTROMS) OF THE RNA POL II COMPLEX</scope>
</reference>
<reference key="39">
    <citation type="journal article" date="2013" name="Nature">
        <title>Structure and function of the initially transcribing RNA polymerase II-TFIIB complex.</title>
        <authorList>
            <person name="Sainsbury S."/>
            <person name="Niesser J."/>
            <person name="Cramer P."/>
        </authorList>
    </citation>
    <scope>X-RAY CRYSTALLOGRAPHY (3.40 ANGSTROMS) IN COMPLEX WITH MAGNESIUM AND ZINC</scope>
</reference>
<reference key="40">
    <citation type="journal article" date="2015" name="Nature">
        <title>Architecture of the RNA polymerase II-Mediator core initiation complex.</title>
        <authorList>
            <person name="Plaschka C."/>
            <person name="Lariviere L."/>
            <person name="Wenzeck L."/>
            <person name="Seizl M."/>
            <person name="Hemann M."/>
            <person name="Tegunov D."/>
            <person name="Petrotchenko E.V."/>
            <person name="Borchers C.H."/>
            <person name="Baumeister W."/>
            <person name="Herzog F."/>
            <person name="Villa E."/>
            <person name="Cramer P."/>
        </authorList>
    </citation>
    <scope>STRUCTURE BY ELECTRON MICROSCOPY (6.60 ANGSTROMS) IN COMPLEX WITH MAGNESIUM AND ZINC</scope>
</reference>
<proteinExistence type="evidence at protein level"/>
<accession>P04050</accession>
<accession>D6VRK8</accession>
<accession>Q12364</accession>
<accession>Q92315</accession>
<dbReference type="EC" id="2.7.7.6"/>
<dbReference type="EMBL" id="X03128">
    <property type="protein sequence ID" value="CAA26904.1"/>
    <property type="molecule type" value="Genomic_DNA"/>
</dbReference>
<dbReference type="EMBL" id="X96876">
    <property type="protein sequence ID" value="CAA65619.1"/>
    <property type="molecule type" value="Genomic_DNA"/>
</dbReference>
<dbReference type="EMBL" id="Z74188">
    <property type="protein sequence ID" value="CAA98713.1"/>
    <property type="molecule type" value="Genomic_DNA"/>
</dbReference>
<dbReference type="EMBL" id="U27182">
    <property type="protein sequence ID" value="AAC49058.1"/>
    <property type="molecule type" value="Genomic_DNA"/>
</dbReference>
<dbReference type="EMBL" id="BK006938">
    <property type="protein sequence ID" value="DAA11718.1"/>
    <property type="molecule type" value="Genomic_DNA"/>
</dbReference>
<dbReference type="PIR" id="S67686">
    <property type="entry name" value="RNBY2L"/>
</dbReference>
<dbReference type="RefSeq" id="NP_010141.1">
    <property type="nucleotide sequence ID" value="NM_001180200.1"/>
</dbReference>
<dbReference type="PDB" id="1I3Q">
    <property type="method" value="X-ray"/>
    <property type="resolution" value="3.10 A"/>
    <property type="chains" value="A=1-1733"/>
</dbReference>
<dbReference type="PDB" id="1I50">
    <property type="method" value="X-ray"/>
    <property type="resolution" value="2.80 A"/>
    <property type="chains" value="A=1-1733"/>
</dbReference>
<dbReference type="PDB" id="1I6H">
    <property type="method" value="X-ray"/>
    <property type="resolution" value="3.30 A"/>
    <property type="chains" value="A=1-1733"/>
</dbReference>
<dbReference type="PDB" id="1K83">
    <property type="method" value="X-ray"/>
    <property type="resolution" value="2.80 A"/>
    <property type="chains" value="A=1-1733"/>
</dbReference>
<dbReference type="PDB" id="1NIK">
    <property type="method" value="X-ray"/>
    <property type="resolution" value="4.10 A"/>
    <property type="chains" value="A=1-1733"/>
</dbReference>
<dbReference type="PDB" id="1NT9">
    <property type="method" value="X-ray"/>
    <property type="resolution" value="4.20 A"/>
    <property type="chains" value="A=1-1733"/>
</dbReference>
<dbReference type="PDB" id="1PQV">
    <property type="method" value="X-ray"/>
    <property type="resolution" value="3.80 A"/>
    <property type="chains" value="A=1-1733"/>
</dbReference>
<dbReference type="PDB" id="1R5U">
    <property type="method" value="X-ray"/>
    <property type="resolution" value="4.50 A"/>
    <property type="chains" value="A=1-1733"/>
</dbReference>
<dbReference type="PDB" id="1R9S">
    <property type="method" value="X-ray"/>
    <property type="resolution" value="4.25 A"/>
    <property type="chains" value="A=1-1733"/>
</dbReference>
<dbReference type="PDB" id="1R9T">
    <property type="method" value="X-ray"/>
    <property type="resolution" value="3.50 A"/>
    <property type="chains" value="A=1-1733"/>
</dbReference>
<dbReference type="PDB" id="1SFO">
    <property type="method" value="X-ray"/>
    <property type="resolution" value="3.61 A"/>
    <property type="chains" value="A=1-1733"/>
</dbReference>
<dbReference type="PDB" id="1TWA">
    <property type="method" value="X-ray"/>
    <property type="resolution" value="3.20 A"/>
    <property type="chains" value="A=1-1733"/>
</dbReference>
<dbReference type="PDB" id="1TWC">
    <property type="method" value="X-ray"/>
    <property type="resolution" value="3.00 A"/>
    <property type="chains" value="A=1-1733"/>
</dbReference>
<dbReference type="PDB" id="1TWF">
    <property type="method" value="X-ray"/>
    <property type="resolution" value="2.30 A"/>
    <property type="chains" value="A=1-1733"/>
</dbReference>
<dbReference type="PDB" id="1TWG">
    <property type="method" value="X-ray"/>
    <property type="resolution" value="3.30 A"/>
    <property type="chains" value="A=1-1733"/>
</dbReference>
<dbReference type="PDB" id="1TWH">
    <property type="method" value="X-ray"/>
    <property type="resolution" value="3.40 A"/>
    <property type="chains" value="A=1-1733"/>
</dbReference>
<dbReference type="PDB" id="1WCM">
    <property type="method" value="X-ray"/>
    <property type="resolution" value="3.80 A"/>
    <property type="chains" value="A=1-1733"/>
</dbReference>
<dbReference type="PDB" id="1Y1V">
    <property type="method" value="X-ray"/>
    <property type="resolution" value="3.80 A"/>
    <property type="chains" value="A=1-1733"/>
</dbReference>
<dbReference type="PDB" id="1Y1W">
    <property type="method" value="X-ray"/>
    <property type="resolution" value="4.00 A"/>
    <property type="chains" value="A=1-1733"/>
</dbReference>
<dbReference type="PDB" id="1Y1Y">
    <property type="method" value="X-ray"/>
    <property type="resolution" value="4.00 A"/>
    <property type="chains" value="A=1-1733"/>
</dbReference>
<dbReference type="PDB" id="1Y77">
    <property type="method" value="X-ray"/>
    <property type="resolution" value="4.50 A"/>
    <property type="chains" value="A=1-1733"/>
</dbReference>
<dbReference type="PDB" id="2B63">
    <property type="method" value="X-ray"/>
    <property type="resolution" value="3.80 A"/>
    <property type="chains" value="A=1-1733"/>
</dbReference>
<dbReference type="PDB" id="2B8K">
    <property type="method" value="X-ray"/>
    <property type="resolution" value="4.15 A"/>
    <property type="chains" value="A=1-1733"/>
</dbReference>
<dbReference type="PDB" id="2E2H">
    <property type="method" value="X-ray"/>
    <property type="resolution" value="3.95 A"/>
    <property type="chains" value="A=1-1733"/>
</dbReference>
<dbReference type="PDB" id="2E2I">
    <property type="method" value="X-ray"/>
    <property type="resolution" value="3.41 A"/>
    <property type="chains" value="A=1-1733"/>
</dbReference>
<dbReference type="PDB" id="2E2J">
    <property type="method" value="X-ray"/>
    <property type="resolution" value="3.50 A"/>
    <property type="chains" value="A=1-1733"/>
</dbReference>
<dbReference type="PDB" id="2JA5">
    <property type="method" value="X-ray"/>
    <property type="resolution" value="3.80 A"/>
    <property type="chains" value="A=1-1733"/>
</dbReference>
<dbReference type="PDB" id="2JA6">
    <property type="method" value="X-ray"/>
    <property type="resolution" value="4.00 A"/>
    <property type="chains" value="A=1-1733"/>
</dbReference>
<dbReference type="PDB" id="2JA7">
    <property type="method" value="X-ray"/>
    <property type="resolution" value="3.80 A"/>
    <property type="chains" value="A/M=1-1733"/>
</dbReference>
<dbReference type="PDB" id="2JA8">
    <property type="method" value="X-ray"/>
    <property type="resolution" value="3.80 A"/>
    <property type="chains" value="A=1-1733"/>
</dbReference>
<dbReference type="PDB" id="2L0I">
    <property type="method" value="NMR"/>
    <property type="chains" value="B=1675-1688"/>
</dbReference>
<dbReference type="PDB" id="2LO6">
    <property type="method" value="NMR"/>
    <property type="chains" value="B=1675-1688"/>
</dbReference>
<dbReference type="PDB" id="2NVQ">
    <property type="method" value="X-ray"/>
    <property type="resolution" value="2.90 A"/>
    <property type="chains" value="A=1-1733"/>
</dbReference>
<dbReference type="PDB" id="2NVT">
    <property type="method" value="X-ray"/>
    <property type="resolution" value="3.36 A"/>
    <property type="chains" value="A=1-1733"/>
</dbReference>
<dbReference type="PDB" id="2NVX">
    <property type="method" value="X-ray"/>
    <property type="resolution" value="3.60 A"/>
    <property type="chains" value="A=1-1733"/>
</dbReference>
<dbReference type="PDB" id="2NVY">
    <property type="method" value="X-ray"/>
    <property type="resolution" value="3.40 A"/>
    <property type="chains" value="A=1-1733"/>
</dbReference>
<dbReference type="PDB" id="2NVZ">
    <property type="method" value="X-ray"/>
    <property type="resolution" value="4.30 A"/>
    <property type="chains" value="A=1-1733"/>
</dbReference>
<dbReference type="PDB" id="2R7Z">
    <property type="method" value="X-ray"/>
    <property type="resolution" value="3.80 A"/>
    <property type="chains" value="A=1-1733"/>
</dbReference>
<dbReference type="PDB" id="2R92">
    <property type="method" value="X-ray"/>
    <property type="resolution" value="3.80 A"/>
    <property type="chains" value="A=1-1733"/>
</dbReference>
<dbReference type="PDB" id="2R93">
    <property type="method" value="X-ray"/>
    <property type="resolution" value="4.00 A"/>
    <property type="chains" value="A=1-1733"/>
</dbReference>
<dbReference type="PDB" id="2VUM">
    <property type="method" value="X-ray"/>
    <property type="resolution" value="3.40 A"/>
    <property type="chains" value="A=1-1733"/>
</dbReference>
<dbReference type="PDB" id="2YU9">
    <property type="method" value="X-ray"/>
    <property type="resolution" value="3.40 A"/>
    <property type="chains" value="A=1-1733"/>
</dbReference>
<dbReference type="PDB" id="3CQZ">
    <property type="method" value="X-ray"/>
    <property type="resolution" value="2.80 A"/>
    <property type="chains" value="A=1-1733"/>
</dbReference>
<dbReference type="PDB" id="3FKI">
    <property type="method" value="X-ray"/>
    <property type="resolution" value="3.88 A"/>
    <property type="chains" value="A=1-1733"/>
</dbReference>
<dbReference type="PDB" id="3GTG">
    <property type="method" value="X-ray"/>
    <property type="resolution" value="3.78 A"/>
    <property type="chains" value="A=1-1733"/>
</dbReference>
<dbReference type="PDB" id="3GTJ">
    <property type="method" value="X-ray"/>
    <property type="resolution" value="3.42 A"/>
    <property type="chains" value="A=1-1733"/>
</dbReference>
<dbReference type="PDB" id="3GTK">
    <property type="method" value="X-ray"/>
    <property type="resolution" value="3.80 A"/>
    <property type="chains" value="A=1-1733"/>
</dbReference>
<dbReference type="PDB" id="3GTL">
    <property type="method" value="X-ray"/>
    <property type="resolution" value="3.38 A"/>
    <property type="chains" value="A=1-1733"/>
</dbReference>
<dbReference type="PDB" id="3GTM">
    <property type="method" value="X-ray"/>
    <property type="resolution" value="3.80 A"/>
    <property type="chains" value="A=1-1733"/>
</dbReference>
<dbReference type="PDB" id="3GTO">
    <property type="method" value="X-ray"/>
    <property type="resolution" value="4.00 A"/>
    <property type="chains" value="A=1-1733"/>
</dbReference>
<dbReference type="PDB" id="3GTP">
    <property type="method" value="X-ray"/>
    <property type="resolution" value="3.90 A"/>
    <property type="chains" value="A=1-1733"/>
</dbReference>
<dbReference type="PDB" id="3GTQ">
    <property type="method" value="X-ray"/>
    <property type="resolution" value="3.80 A"/>
    <property type="chains" value="A=1-1733"/>
</dbReference>
<dbReference type="PDB" id="3H3V">
    <property type="method" value="X-ray"/>
    <property type="resolution" value="4.00 A"/>
    <property type="chains" value="B=1-1733"/>
</dbReference>
<dbReference type="PDB" id="3HOU">
    <property type="method" value="X-ray"/>
    <property type="resolution" value="3.20 A"/>
    <property type="chains" value="A/M=1-1733"/>
</dbReference>
<dbReference type="PDB" id="3HOV">
    <property type="method" value="X-ray"/>
    <property type="resolution" value="3.50 A"/>
    <property type="chains" value="A=1-1733"/>
</dbReference>
<dbReference type="PDB" id="3HOW">
    <property type="method" value="X-ray"/>
    <property type="resolution" value="3.60 A"/>
    <property type="chains" value="A=1-1733"/>
</dbReference>
<dbReference type="PDB" id="3HOX">
    <property type="method" value="X-ray"/>
    <property type="resolution" value="3.65 A"/>
    <property type="chains" value="A=1-1733"/>
</dbReference>
<dbReference type="PDB" id="3HOY">
    <property type="method" value="X-ray"/>
    <property type="resolution" value="3.40 A"/>
    <property type="chains" value="A=1-1733"/>
</dbReference>
<dbReference type="PDB" id="3HOZ">
    <property type="method" value="X-ray"/>
    <property type="resolution" value="3.65 A"/>
    <property type="chains" value="A=1-1733"/>
</dbReference>
<dbReference type="PDB" id="3I4M">
    <property type="method" value="X-ray"/>
    <property type="resolution" value="3.70 A"/>
    <property type="chains" value="A=1-1733"/>
</dbReference>
<dbReference type="PDB" id="3I4N">
    <property type="method" value="X-ray"/>
    <property type="resolution" value="3.90 A"/>
    <property type="chains" value="A=1-1733"/>
</dbReference>
<dbReference type="PDB" id="3J0K">
    <property type="method" value="EM"/>
    <property type="resolution" value="36.00 A"/>
    <property type="chains" value="A=1-1455"/>
</dbReference>
<dbReference type="PDB" id="3J1N">
    <property type="method" value="EM"/>
    <property type="resolution" value="16.00 A"/>
    <property type="chains" value="A=1-1455"/>
</dbReference>
<dbReference type="PDB" id="3K1F">
    <property type="method" value="X-ray"/>
    <property type="resolution" value="4.30 A"/>
    <property type="chains" value="A=1-1733"/>
</dbReference>
<dbReference type="PDB" id="3K7A">
    <property type="method" value="X-ray"/>
    <property type="resolution" value="3.80 A"/>
    <property type="chains" value="A=1-1733"/>
</dbReference>
<dbReference type="PDB" id="3M3Y">
    <property type="method" value="X-ray"/>
    <property type="resolution" value="3.18 A"/>
    <property type="chains" value="A=1-1733"/>
</dbReference>
<dbReference type="PDB" id="3M4O">
    <property type="method" value="X-ray"/>
    <property type="resolution" value="3.57 A"/>
    <property type="chains" value="A=1-1733"/>
</dbReference>
<dbReference type="PDB" id="3PO2">
    <property type="method" value="X-ray"/>
    <property type="resolution" value="3.30 A"/>
    <property type="chains" value="A=1-1733"/>
</dbReference>
<dbReference type="PDB" id="3PO3">
    <property type="method" value="X-ray"/>
    <property type="resolution" value="3.30 A"/>
    <property type="chains" value="A=1-1733"/>
</dbReference>
<dbReference type="PDB" id="3QT1">
    <property type="method" value="X-ray"/>
    <property type="resolution" value="4.30 A"/>
    <property type="chains" value="A=1-1733"/>
</dbReference>
<dbReference type="PDB" id="3RZD">
    <property type="method" value="X-ray"/>
    <property type="resolution" value="3.30 A"/>
    <property type="chains" value="A=1-1733"/>
</dbReference>
<dbReference type="PDB" id="3RZO">
    <property type="method" value="X-ray"/>
    <property type="resolution" value="3.00 A"/>
    <property type="chains" value="A=1-1733"/>
</dbReference>
<dbReference type="PDB" id="3S14">
    <property type="method" value="X-ray"/>
    <property type="resolution" value="2.85 A"/>
    <property type="chains" value="A=1-1733"/>
</dbReference>
<dbReference type="PDB" id="3S15">
    <property type="method" value="X-ray"/>
    <property type="resolution" value="3.30 A"/>
    <property type="chains" value="A=1-1733"/>
</dbReference>
<dbReference type="PDB" id="3S16">
    <property type="method" value="X-ray"/>
    <property type="resolution" value="3.24 A"/>
    <property type="chains" value="A=1-1733"/>
</dbReference>
<dbReference type="PDB" id="3S17">
    <property type="method" value="X-ray"/>
    <property type="resolution" value="3.20 A"/>
    <property type="chains" value="A=1-1733"/>
</dbReference>
<dbReference type="PDB" id="3S1M">
    <property type="method" value="X-ray"/>
    <property type="resolution" value="3.13 A"/>
    <property type="chains" value="A=1-1733"/>
</dbReference>
<dbReference type="PDB" id="3S1N">
    <property type="method" value="X-ray"/>
    <property type="resolution" value="3.10 A"/>
    <property type="chains" value="A=1-1733"/>
</dbReference>
<dbReference type="PDB" id="3S1Q">
    <property type="method" value="X-ray"/>
    <property type="resolution" value="3.30 A"/>
    <property type="chains" value="A=1-1733"/>
</dbReference>
<dbReference type="PDB" id="3S1R">
    <property type="method" value="X-ray"/>
    <property type="resolution" value="3.20 A"/>
    <property type="chains" value="A=1-1733"/>
</dbReference>
<dbReference type="PDB" id="3S2D">
    <property type="method" value="X-ray"/>
    <property type="resolution" value="3.20 A"/>
    <property type="chains" value="A=1-1733"/>
</dbReference>
<dbReference type="PDB" id="3S2H">
    <property type="method" value="X-ray"/>
    <property type="resolution" value="3.30 A"/>
    <property type="chains" value="A=1-1733"/>
</dbReference>
<dbReference type="PDB" id="4A3B">
    <property type="method" value="X-ray"/>
    <property type="resolution" value="3.50 A"/>
    <property type="chains" value="A=1-1732"/>
</dbReference>
<dbReference type="PDB" id="4A3C">
    <property type="method" value="X-ray"/>
    <property type="resolution" value="3.50 A"/>
    <property type="chains" value="A=1-1732"/>
</dbReference>
<dbReference type="PDB" id="4A3D">
    <property type="method" value="X-ray"/>
    <property type="resolution" value="3.40 A"/>
    <property type="chains" value="A=1-1732"/>
</dbReference>
<dbReference type="PDB" id="4A3E">
    <property type="method" value="X-ray"/>
    <property type="resolution" value="3.40 A"/>
    <property type="chains" value="A=1-1732"/>
</dbReference>
<dbReference type="PDB" id="4A3F">
    <property type="method" value="X-ray"/>
    <property type="resolution" value="3.50 A"/>
    <property type="chains" value="A=1-1732"/>
</dbReference>
<dbReference type="PDB" id="4A3G">
    <property type="method" value="X-ray"/>
    <property type="resolution" value="3.50 A"/>
    <property type="chains" value="A=1-1732"/>
</dbReference>
<dbReference type="PDB" id="4A3I">
    <property type="method" value="X-ray"/>
    <property type="resolution" value="3.80 A"/>
    <property type="chains" value="A=1-1732"/>
</dbReference>
<dbReference type="PDB" id="4A3J">
    <property type="method" value="X-ray"/>
    <property type="resolution" value="3.70 A"/>
    <property type="chains" value="A=1-1732"/>
</dbReference>
<dbReference type="PDB" id="4A3K">
    <property type="method" value="X-ray"/>
    <property type="resolution" value="3.50 A"/>
    <property type="chains" value="A=1-1732"/>
</dbReference>
<dbReference type="PDB" id="4A3L">
    <property type="method" value="X-ray"/>
    <property type="resolution" value="3.50 A"/>
    <property type="chains" value="A=1-1732"/>
</dbReference>
<dbReference type="PDB" id="4A3M">
    <property type="method" value="X-ray"/>
    <property type="resolution" value="3.90 A"/>
    <property type="chains" value="A=1-1732"/>
</dbReference>
<dbReference type="PDB" id="4A93">
    <property type="method" value="X-ray"/>
    <property type="resolution" value="3.40 A"/>
    <property type="chains" value="A=1-1732"/>
</dbReference>
<dbReference type="PDB" id="4BBR">
    <property type="method" value="X-ray"/>
    <property type="resolution" value="3.40 A"/>
    <property type="chains" value="A=1-1733"/>
</dbReference>
<dbReference type="PDB" id="4BBS">
    <property type="method" value="X-ray"/>
    <property type="resolution" value="3.60 A"/>
    <property type="chains" value="A=1-1733"/>
</dbReference>
<dbReference type="PDB" id="4BXX">
    <property type="method" value="X-ray"/>
    <property type="resolution" value="3.28 A"/>
    <property type="chains" value="A=1-1733"/>
</dbReference>
<dbReference type="PDB" id="4BXZ">
    <property type="method" value="X-ray"/>
    <property type="resolution" value="4.80 A"/>
    <property type="chains" value="A=1-1733"/>
</dbReference>
<dbReference type="PDB" id="4BY1">
    <property type="method" value="X-ray"/>
    <property type="resolution" value="3.60 A"/>
    <property type="chains" value="A=1-1733"/>
</dbReference>
<dbReference type="PDB" id="4BY7">
    <property type="method" value="X-ray"/>
    <property type="resolution" value="3.15 A"/>
    <property type="chains" value="A=1-1733"/>
</dbReference>
<dbReference type="PDB" id="4GWQ">
    <property type="method" value="X-ray"/>
    <property type="resolution" value="4.50 A"/>
    <property type="chains" value="H=1619-1653"/>
</dbReference>
<dbReference type="PDB" id="4V1M">
    <property type="method" value="EM"/>
    <property type="resolution" value="6.60 A"/>
    <property type="chains" value="A=1-1733"/>
</dbReference>
<dbReference type="PDB" id="4V1N">
    <property type="method" value="EM"/>
    <property type="resolution" value="7.80 A"/>
    <property type="chains" value="A=1-1733"/>
</dbReference>
<dbReference type="PDB" id="4V1O">
    <property type="method" value="EM"/>
    <property type="resolution" value="9.70 A"/>
    <property type="chains" value="A=1-1733"/>
</dbReference>
<dbReference type="PDB" id="4X67">
    <property type="method" value="X-ray"/>
    <property type="resolution" value="4.10 A"/>
    <property type="chains" value="A=1-1733"/>
</dbReference>
<dbReference type="PDB" id="4X6A">
    <property type="method" value="X-ray"/>
    <property type="resolution" value="3.96 A"/>
    <property type="chains" value="A=1-1733"/>
</dbReference>
<dbReference type="PDB" id="4Y52">
    <property type="method" value="X-ray"/>
    <property type="resolution" value="3.50 A"/>
    <property type="chains" value="A=1-1733"/>
</dbReference>
<dbReference type="PDB" id="4Y7N">
    <property type="method" value="X-ray"/>
    <property type="resolution" value="3.30 A"/>
    <property type="chains" value="A=1-1733"/>
</dbReference>
<dbReference type="PDB" id="5C3E">
    <property type="method" value="X-ray"/>
    <property type="resolution" value="3.70 A"/>
    <property type="chains" value="A=1-1733"/>
</dbReference>
<dbReference type="PDB" id="5C44">
    <property type="method" value="X-ray"/>
    <property type="resolution" value="3.95 A"/>
    <property type="chains" value="A=1-1733"/>
</dbReference>
<dbReference type="PDB" id="5C4A">
    <property type="method" value="X-ray"/>
    <property type="resolution" value="4.20 A"/>
    <property type="chains" value="A=1-1733"/>
</dbReference>
<dbReference type="PDB" id="5C4J">
    <property type="method" value="X-ray"/>
    <property type="resolution" value="4.00 A"/>
    <property type="chains" value="A=1-1733"/>
</dbReference>
<dbReference type="PDB" id="5C4X">
    <property type="method" value="X-ray"/>
    <property type="resolution" value="4.00 A"/>
    <property type="chains" value="A=1-1733"/>
</dbReference>
<dbReference type="PDB" id="5FMF">
    <property type="method" value="EM"/>
    <property type="resolution" value="6.00 A"/>
    <property type="chains" value="A=1-1733"/>
</dbReference>
<dbReference type="PDB" id="5FYW">
    <property type="method" value="EM"/>
    <property type="resolution" value="4.35 A"/>
    <property type="chains" value="A=1-1733"/>
</dbReference>
<dbReference type="PDB" id="5FZ5">
    <property type="method" value="EM"/>
    <property type="resolution" value="8.80 A"/>
    <property type="chains" value="A=1-1733"/>
</dbReference>
<dbReference type="PDB" id="5IP7">
    <property type="method" value="X-ray"/>
    <property type="resolution" value="3.52 A"/>
    <property type="chains" value="A=2-1733"/>
</dbReference>
<dbReference type="PDB" id="5IP9">
    <property type="method" value="X-ray"/>
    <property type="resolution" value="3.90 A"/>
    <property type="chains" value="A=2-1733"/>
</dbReference>
<dbReference type="PDB" id="5LVF">
    <property type="method" value="NMR"/>
    <property type="chains" value="B=1673-1688"/>
</dbReference>
<dbReference type="PDB" id="5M9D">
    <property type="method" value="NMR"/>
    <property type="chains" value="B=1678-1693"/>
</dbReference>
<dbReference type="PDB" id="5OQJ">
    <property type="method" value="EM"/>
    <property type="resolution" value="4.70 A"/>
    <property type="chains" value="A=1-1733"/>
</dbReference>
<dbReference type="PDB" id="5OQM">
    <property type="method" value="EM"/>
    <property type="resolution" value="5.80 A"/>
    <property type="chains" value="A=1-1733"/>
</dbReference>
<dbReference type="PDB" id="5OT2">
    <property type="method" value="X-ray"/>
    <property type="resolution" value="3.20 A"/>
    <property type="chains" value="A=1-1733"/>
</dbReference>
<dbReference type="PDB" id="5SVA">
    <property type="method" value="EM"/>
    <property type="resolution" value="15.30 A"/>
    <property type="chains" value="A=1-1733, k=1666-1690"/>
</dbReference>
<dbReference type="PDB" id="5U5Q">
    <property type="method" value="X-ray"/>
    <property type="resolution" value="3.80 A"/>
    <property type="chains" value="A=1-1733"/>
</dbReference>
<dbReference type="PDB" id="5VKL">
    <property type="method" value="X-ray"/>
    <property type="resolution" value="2.20 A"/>
    <property type="chains" value="B=1476-1498"/>
</dbReference>
<dbReference type="PDB" id="5VKO">
    <property type="method" value="X-ray"/>
    <property type="resolution" value="1.80 A"/>
    <property type="chains" value="B=1468-1500"/>
</dbReference>
<dbReference type="PDB" id="5VVR">
    <property type="method" value="EM"/>
    <property type="resolution" value="5.80 A"/>
    <property type="chains" value="A=1-1733"/>
</dbReference>
<dbReference type="PDB" id="5VVS">
    <property type="method" value="EM"/>
    <property type="resolution" value="6.40 A"/>
    <property type="chains" value="A=1-1733"/>
</dbReference>
<dbReference type="PDB" id="5W4U">
    <property type="method" value="X-ray"/>
    <property type="resolution" value="3.60 A"/>
    <property type="chains" value="A=1-1733"/>
</dbReference>
<dbReference type="PDB" id="5W51">
    <property type="method" value="X-ray"/>
    <property type="resolution" value="3.40 A"/>
    <property type="chains" value="A=1-1733"/>
</dbReference>
<dbReference type="PDB" id="6BLO">
    <property type="method" value="X-ray"/>
    <property type="resolution" value="3.40 A"/>
    <property type="chains" value="A=1-1733"/>
</dbReference>
<dbReference type="PDB" id="6BLP">
    <property type="method" value="X-ray"/>
    <property type="resolution" value="3.20 A"/>
    <property type="chains" value="A=1-1733"/>
</dbReference>
<dbReference type="PDB" id="6BM2">
    <property type="method" value="X-ray"/>
    <property type="resolution" value="3.40 A"/>
    <property type="chains" value="A=1-1733"/>
</dbReference>
<dbReference type="PDB" id="6BM4">
    <property type="method" value="X-ray"/>
    <property type="resolution" value="2.95 A"/>
    <property type="chains" value="A=1-1733"/>
</dbReference>
<dbReference type="PDB" id="6BQF">
    <property type="method" value="X-ray"/>
    <property type="resolution" value="3.35 A"/>
    <property type="chains" value="A=1-1733"/>
</dbReference>
<dbReference type="PDB" id="6GYK">
    <property type="method" value="EM"/>
    <property type="resolution" value="5.10 A"/>
    <property type="chains" value="A=1-1733"/>
</dbReference>
<dbReference type="PDB" id="6GYL">
    <property type="method" value="EM"/>
    <property type="resolution" value="4.80 A"/>
    <property type="chains" value="A=1-1733"/>
</dbReference>
<dbReference type="PDB" id="6GYM">
    <property type="method" value="EM"/>
    <property type="resolution" value="6.70 A"/>
    <property type="chains" value="A=1-1733"/>
</dbReference>
<dbReference type="PDB" id="6I84">
    <property type="method" value="EM"/>
    <property type="resolution" value="4.40 A"/>
    <property type="chains" value="A=1-1733"/>
</dbReference>
<dbReference type="PDB" id="6NPW">
    <property type="method" value="X-ray"/>
    <property type="resolution" value="2.49 A"/>
    <property type="chains" value="E=1672-1690"/>
</dbReference>
<dbReference type="PDB" id="6O6C">
    <property type="method" value="EM"/>
    <property type="resolution" value="3.10 A"/>
    <property type="chains" value="A=1-1733"/>
</dbReference>
<dbReference type="PDB" id="6UPX">
    <property type="method" value="X-ray"/>
    <property type="resolution" value="3.40 A"/>
    <property type="chains" value="A=1-1733"/>
</dbReference>
<dbReference type="PDB" id="6UPY">
    <property type="method" value="X-ray"/>
    <property type="resolution" value="3.40 A"/>
    <property type="chains" value="A=1-1733"/>
</dbReference>
<dbReference type="PDB" id="6UPZ">
    <property type="method" value="X-ray"/>
    <property type="resolution" value="3.10 A"/>
    <property type="chains" value="A=1-1733"/>
</dbReference>
<dbReference type="PDB" id="6UQ0">
    <property type="method" value="X-ray"/>
    <property type="resolution" value="3.56 A"/>
    <property type="chains" value="A=1-1733"/>
</dbReference>
<dbReference type="PDB" id="6UQ1">
    <property type="method" value="X-ray"/>
    <property type="resolution" value="3.60 A"/>
    <property type="chains" value="A=1-1733"/>
</dbReference>
<dbReference type="PDB" id="6UQ2">
    <property type="method" value="X-ray"/>
    <property type="resolution" value="3.20 A"/>
    <property type="chains" value="A=1-1733"/>
</dbReference>
<dbReference type="PDB" id="6UQ3">
    <property type="method" value="X-ray"/>
    <property type="resolution" value="3.47 A"/>
    <property type="chains" value="A=1-1733"/>
</dbReference>
<dbReference type="PDB" id="7KED">
    <property type="method" value="X-ray"/>
    <property type="resolution" value="3.60 A"/>
    <property type="chains" value="A=1-1733"/>
</dbReference>
<dbReference type="PDB" id="7KEE">
    <property type="method" value="X-ray"/>
    <property type="resolution" value="3.45 A"/>
    <property type="chains" value="A=1-1733"/>
</dbReference>
<dbReference type="PDB" id="7KEF">
    <property type="method" value="X-ray"/>
    <property type="resolution" value="3.89 A"/>
    <property type="chains" value="A=1-1733"/>
</dbReference>
<dbReference type="PDB" id="7MEI">
    <property type="method" value="EM"/>
    <property type="resolution" value="3.54 A"/>
    <property type="chains" value="A/a=1-1733"/>
</dbReference>
<dbReference type="PDB" id="7MK9">
    <property type="method" value="EM"/>
    <property type="resolution" value="3.54 A"/>
    <property type="chains" value="A=1-1733"/>
</dbReference>
<dbReference type="PDB" id="7MKA">
    <property type="method" value="EM"/>
    <property type="resolution" value="3.54 A"/>
    <property type="chains" value="a=1-1733"/>
</dbReference>
<dbReference type="PDB" id="7ML0">
    <property type="method" value="EM"/>
    <property type="resolution" value="3.00 A"/>
    <property type="chains" value="A=1-1733"/>
</dbReference>
<dbReference type="PDB" id="7ML1">
    <property type="method" value="EM"/>
    <property type="resolution" value="4.00 A"/>
    <property type="chains" value="A=1-1733"/>
</dbReference>
<dbReference type="PDB" id="7ML2">
    <property type="method" value="EM"/>
    <property type="resolution" value="3.40 A"/>
    <property type="chains" value="A=1-1733"/>
</dbReference>
<dbReference type="PDB" id="7ML4">
    <property type="method" value="EM"/>
    <property type="resolution" value="3.10 A"/>
    <property type="chains" value="A=1-1733"/>
</dbReference>
<dbReference type="PDB" id="7NKX">
    <property type="method" value="EM"/>
    <property type="resolution" value="2.90 A"/>
    <property type="chains" value="A=1-1733"/>
</dbReference>
<dbReference type="PDB" id="7NKY">
    <property type="method" value="EM"/>
    <property type="resolution" value="3.20 A"/>
    <property type="chains" value="A=1-1733"/>
</dbReference>
<dbReference type="PDB" id="7O4I">
    <property type="method" value="EM"/>
    <property type="resolution" value="3.20 A"/>
    <property type="chains" value="A=1-1733"/>
</dbReference>
<dbReference type="PDB" id="7O4J">
    <property type="method" value="EM"/>
    <property type="resolution" value="2.90 A"/>
    <property type="chains" value="A=1-1733"/>
</dbReference>
<dbReference type="PDB" id="7O4K">
    <property type="method" value="EM"/>
    <property type="resolution" value="3.60 A"/>
    <property type="chains" value="A=1-1733"/>
</dbReference>
<dbReference type="PDB" id="7O4L">
    <property type="method" value="EM"/>
    <property type="resolution" value="3.40 A"/>
    <property type="chains" value="A=1-1733"/>
</dbReference>
<dbReference type="PDB" id="7O72">
    <property type="method" value="EM"/>
    <property type="resolution" value="3.40 A"/>
    <property type="chains" value="A=1-1733"/>
</dbReference>
<dbReference type="PDB" id="7O73">
    <property type="method" value="EM"/>
    <property type="resolution" value="3.40 A"/>
    <property type="chains" value="A=1-1733"/>
</dbReference>
<dbReference type="PDB" id="7O75">
    <property type="method" value="EM"/>
    <property type="resolution" value="3.20 A"/>
    <property type="chains" value="A=1-1733"/>
</dbReference>
<dbReference type="PDB" id="7RIM">
    <property type="method" value="X-ray"/>
    <property type="resolution" value="2.90 A"/>
    <property type="chains" value="A=1-1733"/>
</dbReference>
<dbReference type="PDB" id="7RIP">
    <property type="method" value="X-ray"/>
    <property type="resolution" value="3.30 A"/>
    <property type="chains" value="A=1-1733"/>
</dbReference>
<dbReference type="PDB" id="7RIQ">
    <property type="method" value="X-ray"/>
    <property type="resolution" value="3.00 A"/>
    <property type="chains" value="A=1-1733"/>
</dbReference>
<dbReference type="PDB" id="7RIW">
    <property type="method" value="X-ray"/>
    <property type="resolution" value="3.20 A"/>
    <property type="chains" value="A=1-1733"/>
</dbReference>
<dbReference type="PDB" id="7RIX">
    <property type="method" value="X-ray"/>
    <property type="resolution" value="3.40 A"/>
    <property type="chains" value="A=1-1733"/>
</dbReference>
<dbReference type="PDB" id="7RIY">
    <property type="method" value="X-ray"/>
    <property type="resolution" value="3.70 A"/>
    <property type="chains" value="A=1-1733"/>
</dbReference>
<dbReference type="PDB" id="7UI9">
    <property type="method" value="EM"/>
    <property type="resolution" value="3.30 A"/>
    <property type="chains" value="A=1-1453, z=1666-1690"/>
</dbReference>
<dbReference type="PDB" id="7UIF">
    <property type="method" value="EM"/>
    <property type="resolution" value="4.60 A"/>
    <property type="chains" value="A/z=1-1733"/>
</dbReference>
<dbReference type="PDB" id="7UIG">
    <property type="method" value="EM"/>
    <property type="resolution" value="4.30 A"/>
    <property type="chains" value="z=1-1733"/>
</dbReference>
<dbReference type="PDB" id="7UIO">
    <property type="method" value="EM"/>
    <property type="resolution" value="3.30 A"/>
    <property type="chains" value="AA/BA=1-1453, Az/Bz=1666-1690"/>
</dbReference>
<dbReference type="PDB" id="7ZS9">
    <property type="method" value="EM"/>
    <property type="resolution" value="3.10 A"/>
    <property type="chains" value="A=1-1733"/>
</dbReference>
<dbReference type="PDB" id="7ZSA">
    <property type="method" value="EM"/>
    <property type="resolution" value="4.00 A"/>
    <property type="chains" value="A=1-1733"/>
</dbReference>
<dbReference type="PDB" id="7ZSB">
    <property type="method" value="EM"/>
    <property type="resolution" value="6.60 A"/>
    <property type="chains" value="A=1-1733"/>
</dbReference>
<dbReference type="PDB" id="8CEN">
    <property type="method" value="EM"/>
    <property type="resolution" value="3.00 A"/>
    <property type="chains" value="A=1-1733"/>
</dbReference>
<dbReference type="PDB" id="8CEO">
    <property type="method" value="EM"/>
    <property type="resolution" value="3.60 A"/>
    <property type="chains" value="A=1-1733"/>
</dbReference>
<dbReference type="PDB" id="8JCH">
    <property type="method" value="EM"/>
    <property type="resolution" value="2.70 A"/>
    <property type="chains" value="A=1-1733"/>
</dbReference>
<dbReference type="PDB" id="8K5P">
    <property type="method" value="EM"/>
    <property type="resolution" value="2.80 A"/>
    <property type="chains" value="A=1-1733"/>
</dbReference>
<dbReference type="PDB" id="8RAM">
    <property type="method" value="EM"/>
    <property type="resolution" value="2.80 A"/>
    <property type="chains" value="A=1-1733"/>
</dbReference>
<dbReference type="PDB" id="8RAP">
    <property type="method" value="EM"/>
    <property type="resolution" value="4.30 A"/>
    <property type="chains" value="A=1-1733"/>
</dbReference>
<dbReference type="PDB" id="8TUG">
    <property type="method" value="EM"/>
    <property type="resolution" value="3.50 A"/>
    <property type="chains" value="A=1-1733"/>
</dbReference>
<dbReference type="PDB" id="8TVP">
    <property type="method" value="EM"/>
    <property type="resolution" value="3.70 A"/>
    <property type="chains" value="A=1-1733"/>
</dbReference>
<dbReference type="PDB" id="8TVQ">
    <property type="method" value="EM"/>
    <property type="resolution" value="4.60 A"/>
    <property type="chains" value="A=1-1733"/>
</dbReference>
<dbReference type="PDB" id="8TVS">
    <property type="method" value="EM"/>
    <property type="resolution" value="4.40 A"/>
    <property type="chains" value="A=1-1733"/>
</dbReference>
<dbReference type="PDB" id="8TVV">
    <property type="method" value="EM"/>
    <property type="resolution" value="3.70 A"/>
    <property type="chains" value="A=1-1733"/>
</dbReference>
<dbReference type="PDB" id="8TVW">
    <property type="method" value="EM"/>
    <property type="resolution" value="3.60 A"/>
    <property type="chains" value="A=1-1733"/>
</dbReference>
<dbReference type="PDB" id="8TVX">
    <property type="method" value="EM"/>
    <property type="resolution" value="3.70 A"/>
    <property type="chains" value="A=1-1733"/>
</dbReference>
<dbReference type="PDB" id="8TVY">
    <property type="method" value="EM"/>
    <property type="resolution" value="3.10 A"/>
    <property type="chains" value="A=1-1733"/>
</dbReference>
<dbReference type="PDB" id="8U9R">
    <property type="method" value="X-ray"/>
    <property type="resolution" value="3.34 A"/>
    <property type="chains" value="A=1-1733"/>
</dbReference>
<dbReference type="PDB" id="8U9X">
    <property type="method" value="X-ray"/>
    <property type="resolution" value="3.05 A"/>
    <property type="chains" value="A=1-1733"/>
</dbReference>
<dbReference type="PDB" id="8UKQ">
    <property type="method" value="X-ray"/>
    <property type="resolution" value="3.50 A"/>
    <property type="chains" value="A=1-1733"/>
</dbReference>
<dbReference type="PDB" id="8UKR">
    <property type="method" value="X-ray"/>
    <property type="resolution" value="3.78 A"/>
    <property type="chains" value="A=1-1733"/>
</dbReference>
<dbReference type="PDB" id="8UKS">
    <property type="method" value="X-ray"/>
    <property type="resolution" value="3.40 A"/>
    <property type="chains" value="A=1-1733"/>
</dbReference>
<dbReference type="PDB" id="8UKT">
    <property type="method" value="X-ray"/>
    <property type="resolution" value="3.60 A"/>
    <property type="chains" value="A=1-1733"/>
</dbReference>
<dbReference type="PDB" id="8UKU">
    <property type="method" value="X-ray"/>
    <property type="resolution" value="3.60 A"/>
    <property type="chains" value="A=1-1733"/>
</dbReference>
<dbReference type="PDB" id="8UMH">
    <property type="method" value="EM"/>
    <property type="resolution" value="4.10 A"/>
    <property type="chains" value="A=1-1733"/>
</dbReference>
<dbReference type="PDB" id="8UMI">
    <property type="method" value="EM"/>
    <property type="resolution" value="3.70 A"/>
    <property type="chains" value="A=1-1733"/>
</dbReference>
<dbReference type="PDB" id="8UOQ">
    <property type="method" value="EM"/>
    <property type="resolution" value="3.80 A"/>
    <property type="chains" value="A=1-1733"/>
</dbReference>
<dbReference type="PDB" id="8UOT">
    <property type="method" value="EM"/>
    <property type="resolution" value="3.70 A"/>
    <property type="chains" value="A=1-1733"/>
</dbReference>
<dbReference type="PDB" id="9BVT">
    <property type="method" value="X-ray"/>
    <property type="resolution" value="3.40 A"/>
    <property type="chains" value="A=1-1733"/>
</dbReference>
<dbReference type="PDB" id="9BW0">
    <property type="method" value="X-ray"/>
    <property type="resolution" value="3.51 A"/>
    <property type="chains" value="A=1-1733"/>
</dbReference>
<dbReference type="PDB" id="9JA1">
    <property type="method" value="EM"/>
    <property type="resolution" value="2.98 A"/>
    <property type="chains" value="A=1-1733"/>
</dbReference>
<dbReference type="PDBsum" id="1I3Q"/>
<dbReference type="PDBsum" id="1I50"/>
<dbReference type="PDBsum" id="1I6H"/>
<dbReference type="PDBsum" id="1K83"/>
<dbReference type="PDBsum" id="1NIK"/>
<dbReference type="PDBsum" id="1NT9"/>
<dbReference type="PDBsum" id="1PQV"/>
<dbReference type="PDBsum" id="1R5U"/>
<dbReference type="PDBsum" id="1R9S"/>
<dbReference type="PDBsum" id="1R9T"/>
<dbReference type="PDBsum" id="1SFO"/>
<dbReference type="PDBsum" id="1TWA"/>
<dbReference type="PDBsum" id="1TWC"/>
<dbReference type="PDBsum" id="1TWF"/>
<dbReference type="PDBsum" id="1TWG"/>
<dbReference type="PDBsum" id="1TWH"/>
<dbReference type="PDBsum" id="1WCM"/>
<dbReference type="PDBsum" id="1Y1V"/>
<dbReference type="PDBsum" id="1Y1W"/>
<dbReference type="PDBsum" id="1Y1Y"/>
<dbReference type="PDBsum" id="1Y77"/>
<dbReference type="PDBsum" id="2B63"/>
<dbReference type="PDBsum" id="2B8K"/>
<dbReference type="PDBsum" id="2E2H"/>
<dbReference type="PDBsum" id="2E2I"/>
<dbReference type="PDBsum" id="2E2J"/>
<dbReference type="PDBsum" id="2JA5"/>
<dbReference type="PDBsum" id="2JA6"/>
<dbReference type="PDBsum" id="2JA7"/>
<dbReference type="PDBsum" id="2JA8"/>
<dbReference type="PDBsum" id="2L0I"/>
<dbReference type="PDBsum" id="2LO6"/>
<dbReference type="PDBsum" id="2NVQ"/>
<dbReference type="PDBsum" id="2NVT"/>
<dbReference type="PDBsum" id="2NVX"/>
<dbReference type="PDBsum" id="2NVY"/>
<dbReference type="PDBsum" id="2NVZ"/>
<dbReference type="PDBsum" id="2R7Z"/>
<dbReference type="PDBsum" id="2R92"/>
<dbReference type="PDBsum" id="2R93"/>
<dbReference type="PDBsum" id="2VUM"/>
<dbReference type="PDBsum" id="2YU9"/>
<dbReference type="PDBsum" id="3CQZ"/>
<dbReference type="PDBsum" id="3FKI"/>
<dbReference type="PDBsum" id="3GTG"/>
<dbReference type="PDBsum" id="3GTJ"/>
<dbReference type="PDBsum" id="3GTK"/>
<dbReference type="PDBsum" id="3GTL"/>
<dbReference type="PDBsum" id="3GTM"/>
<dbReference type="PDBsum" id="3GTO"/>
<dbReference type="PDBsum" id="3GTP"/>
<dbReference type="PDBsum" id="3GTQ"/>
<dbReference type="PDBsum" id="3H3V"/>
<dbReference type="PDBsum" id="3HOU"/>
<dbReference type="PDBsum" id="3HOV"/>
<dbReference type="PDBsum" id="3HOW"/>
<dbReference type="PDBsum" id="3HOX"/>
<dbReference type="PDBsum" id="3HOY"/>
<dbReference type="PDBsum" id="3HOZ"/>
<dbReference type="PDBsum" id="3I4M"/>
<dbReference type="PDBsum" id="3I4N"/>
<dbReference type="PDBsum" id="3J0K"/>
<dbReference type="PDBsum" id="3J1N"/>
<dbReference type="PDBsum" id="3K1F"/>
<dbReference type="PDBsum" id="3K7A"/>
<dbReference type="PDBsum" id="3M3Y"/>
<dbReference type="PDBsum" id="3M4O"/>
<dbReference type="PDBsum" id="3PO2"/>
<dbReference type="PDBsum" id="3PO3"/>
<dbReference type="PDBsum" id="3QT1"/>
<dbReference type="PDBsum" id="3RZD"/>
<dbReference type="PDBsum" id="3RZO"/>
<dbReference type="PDBsum" id="3S14"/>
<dbReference type="PDBsum" id="3S15"/>
<dbReference type="PDBsum" id="3S16"/>
<dbReference type="PDBsum" id="3S17"/>
<dbReference type="PDBsum" id="3S1M"/>
<dbReference type="PDBsum" id="3S1N"/>
<dbReference type="PDBsum" id="3S1Q"/>
<dbReference type="PDBsum" id="3S1R"/>
<dbReference type="PDBsum" id="3S2D"/>
<dbReference type="PDBsum" id="3S2H"/>
<dbReference type="PDBsum" id="4A3B"/>
<dbReference type="PDBsum" id="4A3C"/>
<dbReference type="PDBsum" id="4A3D"/>
<dbReference type="PDBsum" id="4A3E"/>
<dbReference type="PDBsum" id="4A3F"/>
<dbReference type="PDBsum" id="4A3G"/>
<dbReference type="PDBsum" id="4A3I"/>
<dbReference type="PDBsum" id="4A3J"/>
<dbReference type="PDBsum" id="4A3K"/>
<dbReference type="PDBsum" id="4A3L"/>
<dbReference type="PDBsum" id="4A3M"/>
<dbReference type="PDBsum" id="4A93"/>
<dbReference type="PDBsum" id="4BBR"/>
<dbReference type="PDBsum" id="4BBS"/>
<dbReference type="PDBsum" id="4BXX"/>
<dbReference type="PDBsum" id="4BXZ"/>
<dbReference type="PDBsum" id="4BY1"/>
<dbReference type="PDBsum" id="4BY7"/>
<dbReference type="PDBsum" id="4GWQ"/>
<dbReference type="PDBsum" id="4V1M"/>
<dbReference type="PDBsum" id="4V1N"/>
<dbReference type="PDBsum" id="4V1O"/>
<dbReference type="PDBsum" id="4X67"/>
<dbReference type="PDBsum" id="4X6A"/>
<dbReference type="PDBsum" id="4Y52"/>
<dbReference type="PDBsum" id="4Y7N"/>
<dbReference type="PDBsum" id="5C3E"/>
<dbReference type="PDBsum" id="5C44"/>
<dbReference type="PDBsum" id="5C4A"/>
<dbReference type="PDBsum" id="5C4J"/>
<dbReference type="PDBsum" id="5C4X"/>
<dbReference type="PDBsum" id="5FMF"/>
<dbReference type="PDBsum" id="5FYW"/>
<dbReference type="PDBsum" id="5FZ5"/>
<dbReference type="PDBsum" id="5IP7"/>
<dbReference type="PDBsum" id="5IP9"/>
<dbReference type="PDBsum" id="5LVF"/>
<dbReference type="PDBsum" id="5M9D"/>
<dbReference type="PDBsum" id="5OQJ"/>
<dbReference type="PDBsum" id="5OQM"/>
<dbReference type="PDBsum" id="5OT2"/>
<dbReference type="PDBsum" id="5SVA"/>
<dbReference type="PDBsum" id="5U5Q"/>
<dbReference type="PDBsum" id="5VKL"/>
<dbReference type="PDBsum" id="5VKO"/>
<dbReference type="PDBsum" id="5VVR"/>
<dbReference type="PDBsum" id="5VVS"/>
<dbReference type="PDBsum" id="5W4U"/>
<dbReference type="PDBsum" id="5W51"/>
<dbReference type="PDBsum" id="6BLO"/>
<dbReference type="PDBsum" id="6BLP"/>
<dbReference type="PDBsum" id="6BM2"/>
<dbReference type="PDBsum" id="6BM4"/>
<dbReference type="PDBsum" id="6BQF"/>
<dbReference type="PDBsum" id="6GYK"/>
<dbReference type="PDBsum" id="6GYL"/>
<dbReference type="PDBsum" id="6GYM"/>
<dbReference type="PDBsum" id="6I84"/>
<dbReference type="PDBsum" id="6NPW"/>
<dbReference type="PDBsum" id="6O6C"/>
<dbReference type="PDBsum" id="6UPX"/>
<dbReference type="PDBsum" id="6UPY"/>
<dbReference type="PDBsum" id="6UPZ"/>
<dbReference type="PDBsum" id="6UQ0"/>
<dbReference type="PDBsum" id="6UQ1"/>
<dbReference type="PDBsum" id="6UQ2"/>
<dbReference type="PDBsum" id="6UQ3"/>
<dbReference type="PDBsum" id="7KED"/>
<dbReference type="PDBsum" id="7KEE"/>
<dbReference type="PDBsum" id="7KEF"/>
<dbReference type="PDBsum" id="7MEI"/>
<dbReference type="PDBsum" id="7MK9"/>
<dbReference type="PDBsum" id="7MKA"/>
<dbReference type="PDBsum" id="7ML0"/>
<dbReference type="PDBsum" id="7ML1"/>
<dbReference type="PDBsum" id="7ML2"/>
<dbReference type="PDBsum" id="7ML4"/>
<dbReference type="PDBsum" id="7NKX"/>
<dbReference type="PDBsum" id="7NKY"/>
<dbReference type="PDBsum" id="7O4I"/>
<dbReference type="PDBsum" id="7O4J"/>
<dbReference type="PDBsum" id="7O4K"/>
<dbReference type="PDBsum" id="7O4L"/>
<dbReference type="PDBsum" id="7O72"/>
<dbReference type="PDBsum" id="7O73"/>
<dbReference type="PDBsum" id="7O75"/>
<dbReference type="PDBsum" id="7RIM"/>
<dbReference type="PDBsum" id="7RIP"/>
<dbReference type="PDBsum" id="7RIQ"/>
<dbReference type="PDBsum" id="7RIW"/>
<dbReference type="PDBsum" id="7RIX"/>
<dbReference type="PDBsum" id="7RIY"/>
<dbReference type="PDBsum" id="7UI9"/>
<dbReference type="PDBsum" id="7UIF"/>
<dbReference type="PDBsum" id="7UIG"/>
<dbReference type="PDBsum" id="7UIO"/>
<dbReference type="PDBsum" id="7ZS9"/>
<dbReference type="PDBsum" id="7ZSA"/>
<dbReference type="PDBsum" id="7ZSB"/>
<dbReference type="PDBsum" id="8CEN"/>
<dbReference type="PDBsum" id="8CEO"/>
<dbReference type="PDBsum" id="8JCH"/>
<dbReference type="PDBsum" id="8K5P"/>
<dbReference type="PDBsum" id="8RAM"/>
<dbReference type="PDBsum" id="8RAP"/>
<dbReference type="PDBsum" id="8TUG"/>
<dbReference type="PDBsum" id="8TVP"/>
<dbReference type="PDBsum" id="8TVQ"/>
<dbReference type="PDBsum" id="8TVS"/>
<dbReference type="PDBsum" id="8TVV"/>
<dbReference type="PDBsum" id="8TVW"/>
<dbReference type="PDBsum" id="8TVX"/>
<dbReference type="PDBsum" id="8TVY"/>
<dbReference type="PDBsum" id="8U9R"/>
<dbReference type="PDBsum" id="8U9X"/>
<dbReference type="PDBsum" id="8UKQ"/>
<dbReference type="PDBsum" id="8UKR"/>
<dbReference type="PDBsum" id="8UKS"/>
<dbReference type="PDBsum" id="8UKT"/>
<dbReference type="PDBsum" id="8UKU"/>
<dbReference type="PDBsum" id="8UMH"/>
<dbReference type="PDBsum" id="8UMI"/>
<dbReference type="PDBsum" id="8UOQ"/>
<dbReference type="PDBsum" id="8UOT"/>
<dbReference type="PDBsum" id="9BVT"/>
<dbReference type="PDBsum" id="9BW0"/>
<dbReference type="PDBsum" id="9JA1"/>
<dbReference type="EMDB" id="EMD-0090"/>
<dbReference type="EMDB" id="EMD-0091"/>
<dbReference type="EMDB" id="EMD-0092"/>
<dbReference type="EMDB" id="EMD-0633"/>
<dbReference type="EMDB" id="EMD-12449"/>
<dbReference type="EMDB" id="EMD-12450"/>
<dbReference type="EMDB" id="EMD-12719"/>
<dbReference type="EMDB" id="EMD-12720"/>
<dbReference type="EMDB" id="EMD-12721"/>
<dbReference type="EMDB" id="EMD-12722"/>
<dbReference type="EMDB" id="EMD-12743"/>
<dbReference type="EMDB" id="EMD-12744"/>
<dbReference type="EMDB" id="EMD-12745"/>
<dbReference type="EMDB" id="EMD-14927"/>
<dbReference type="EMDB" id="EMD-14928"/>
<dbReference type="EMDB" id="EMD-14929"/>
<dbReference type="EMDB" id="EMD-16610"/>
<dbReference type="EMDB" id="EMD-16611"/>
<dbReference type="EMDB" id="EMD-19019"/>
<dbReference type="EMDB" id="EMD-19022"/>
<dbReference type="EMDB" id="EMD-23904"/>
<dbReference type="EMDB" id="EMD-26542"/>
<dbReference type="EMDB" id="EMD-26544"/>
<dbReference type="EMDB" id="EMD-26545"/>
<dbReference type="EMDB" id="EMD-26551"/>
<dbReference type="EMDB" id="EMD-2784"/>
<dbReference type="EMDB" id="EMD-2785"/>
<dbReference type="EMDB" id="EMD-2786"/>
<dbReference type="EMDB" id="EMD-3378"/>
<dbReference type="EMDB" id="EMD-3383"/>
<dbReference type="EMDB" id="EMD-36162"/>
<dbReference type="EMDB" id="EMD-36908"/>
<dbReference type="EMDB" id="EMD-3846"/>
<dbReference type="EMDB" id="EMD-3850"/>
<dbReference type="EMDB" id="EMD-41623"/>
<dbReference type="EMDB" id="EMD-41647"/>
<dbReference type="EMDB" id="EMD-41648"/>
<dbReference type="EMDB" id="EMD-41652"/>
<dbReference type="EMDB" id="EMD-41653"/>
<dbReference type="EMDB" id="EMD-41654"/>
<dbReference type="EMDB" id="EMD-41655"/>
<dbReference type="EMDB" id="EMD-42437"/>
<dbReference type="EMDB" id="EMD-42438"/>
<dbReference type="EMDB" id="EMD-4429"/>
<dbReference type="EMDB" id="EMD-5343"/>
<dbReference type="EMDB" id="EMD-5407"/>
<dbReference type="EMDB" id="EMD-61287"/>
<dbReference type="EMDB" id="EMD-8305"/>
<dbReference type="EMDB" id="EMD-8735"/>
<dbReference type="EMDB" id="EMD-8737"/>
<dbReference type="SASBDB" id="P04050"/>
<dbReference type="SMR" id="P04050"/>
<dbReference type="BioGRID" id="31921">
    <property type="interactions" value="1348"/>
</dbReference>
<dbReference type="ComplexPortal" id="CPX-2662">
    <property type="entry name" value="DNA-directed RNA polymerase II complex"/>
</dbReference>
<dbReference type="DIP" id="DIP-611N"/>
<dbReference type="FunCoup" id="P04050">
    <property type="interactions" value="1405"/>
</dbReference>
<dbReference type="IntAct" id="P04050">
    <property type="interactions" value="89"/>
</dbReference>
<dbReference type="MINT" id="P04050"/>
<dbReference type="STRING" id="4932.YDL140C"/>
<dbReference type="CarbonylDB" id="P04050"/>
<dbReference type="GlyGen" id="P04050">
    <property type="glycosylation" value="2 sites"/>
</dbReference>
<dbReference type="iPTMnet" id="P04050"/>
<dbReference type="PaxDb" id="4932-YDL140C"/>
<dbReference type="PeptideAtlas" id="P04050"/>
<dbReference type="PRIDE" id="P04050"/>
<dbReference type="TopDownProteomics" id="P04050"/>
<dbReference type="EnsemblFungi" id="YDL140C_mRNA">
    <property type="protein sequence ID" value="YDL140C"/>
    <property type="gene ID" value="YDL140C"/>
</dbReference>
<dbReference type="GeneID" id="851415"/>
<dbReference type="KEGG" id="sce:YDL140C"/>
<dbReference type="AGR" id="SGD:S000002299"/>
<dbReference type="SGD" id="S000002299">
    <property type="gene designation" value="RPO21"/>
</dbReference>
<dbReference type="VEuPathDB" id="FungiDB:YDL140C"/>
<dbReference type="eggNOG" id="KOG0260">
    <property type="taxonomic scope" value="Eukaryota"/>
</dbReference>
<dbReference type="GeneTree" id="ENSGT00930000151033"/>
<dbReference type="HOGENOM" id="CLU_000487_3_0_1"/>
<dbReference type="InParanoid" id="P04050"/>
<dbReference type="OMA" id="KPCMGIV"/>
<dbReference type="OrthoDB" id="270392at2759"/>
<dbReference type="BioCyc" id="YEAST:G3O-29539-MONOMER"/>
<dbReference type="BRENDA" id="2.7.7.6">
    <property type="organism ID" value="984"/>
</dbReference>
<dbReference type="Reactome" id="R-SCE-113418">
    <property type="pathway name" value="Formation of the Early Elongation Complex"/>
</dbReference>
<dbReference type="Reactome" id="R-SCE-674695">
    <property type="pathway name" value="RNA Polymerase II Pre-transcription Events"/>
</dbReference>
<dbReference type="Reactome" id="R-SCE-6781823">
    <property type="pathway name" value="Formation of TC-NER Pre-Incision Complex"/>
</dbReference>
<dbReference type="Reactome" id="R-SCE-6782135">
    <property type="pathway name" value="Dual incision in TC-NER"/>
</dbReference>
<dbReference type="Reactome" id="R-SCE-6782210">
    <property type="pathway name" value="Gap-filling DNA repair synthesis and ligation in TC-NER"/>
</dbReference>
<dbReference type="Reactome" id="R-SCE-6796648">
    <property type="pathway name" value="TP53 Regulates Transcription of DNA Repair Genes"/>
</dbReference>
<dbReference type="Reactome" id="R-SCE-6807505">
    <property type="pathway name" value="RNA polymerase II transcribes snRNA genes"/>
</dbReference>
<dbReference type="Reactome" id="R-SCE-72086">
    <property type="pathway name" value="mRNA Capping"/>
</dbReference>
<dbReference type="Reactome" id="R-SCE-72203">
    <property type="pathway name" value="Processing of Capped Intron-Containing Pre-mRNA"/>
</dbReference>
<dbReference type="Reactome" id="R-SCE-73776">
    <property type="pathway name" value="RNA Polymerase II Promoter Escape"/>
</dbReference>
<dbReference type="Reactome" id="R-SCE-73779">
    <property type="pathway name" value="RNA Polymerase II Transcription Pre-Initiation And Promoter Opening"/>
</dbReference>
<dbReference type="Reactome" id="R-SCE-75953">
    <property type="pathway name" value="RNA Polymerase II Transcription Initiation"/>
</dbReference>
<dbReference type="Reactome" id="R-SCE-76042">
    <property type="pathway name" value="RNA Polymerase II Transcription Initiation And Promoter Clearance"/>
</dbReference>
<dbReference type="Reactome" id="R-SCE-77075">
    <property type="pathway name" value="RNA Pol II CTD phosphorylation and interaction with CE"/>
</dbReference>
<dbReference type="Reactome" id="R-SCE-9018519">
    <property type="pathway name" value="Estrogen-dependent gene expression"/>
</dbReference>
<dbReference type="BioGRID-ORCS" id="851415">
    <property type="hits" value="5 hits in 10 CRISPR screens"/>
</dbReference>
<dbReference type="CD-CODE" id="0CC02154">
    <property type="entry name" value="RNA polymerase clusters"/>
</dbReference>
<dbReference type="CD-CODE" id="777112DF">
    <property type="entry name" value="Synthetic Condensate 000111"/>
</dbReference>
<dbReference type="CD-CODE" id="8E4C2D28">
    <property type="entry name" value="Synthetic Condensate 000124"/>
</dbReference>
<dbReference type="CD-CODE" id="917A6517">
    <property type="entry name" value="Synthetic Condensate 000120"/>
</dbReference>
<dbReference type="CD-CODE" id="E03F929F">
    <property type="entry name" value="Stress granule"/>
</dbReference>
<dbReference type="EvolutionaryTrace" id="P04050"/>
<dbReference type="PRO" id="PR:P04050"/>
<dbReference type="Proteomes" id="UP000002311">
    <property type="component" value="Chromosome IV"/>
</dbReference>
<dbReference type="RNAct" id="P04050">
    <property type="molecule type" value="protein"/>
</dbReference>
<dbReference type="GO" id="GO:0010494">
    <property type="term" value="C:cytoplasmic stress granule"/>
    <property type="evidence" value="ECO:0007005"/>
    <property type="project" value="SGD"/>
</dbReference>
<dbReference type="GO" id="GO:0005739">
    <property type="term" value="C:mitochondrion"/>
    <property type="evidence" value="ECO:0007005"/>
    <property type="project" value="SGD"/>
</dbReference>
<dbReference type="GO" id="GO:0005634">
    <property type="term" value="C:nucleus"/>
    <property type="evidence" value="ECO:0000314"/>
    <property type="project" value="CACAO"/>
</dbReference>
<dbReference type="GO" id="GO:0005665">
    <property type="term" value="C:RNA polymerase II, core complex"/>
    <property type="evidence" value="ECO:0000314"/>
    <property type="project" value="SGD"/>
</dbReference>
<dbReference type="GO" id="GO:0003677">
    <property type="term" value="F:DNA binding"/>
    <property type="evidence" value="ECO:0000314"/>
    <property type="project" value="SGD"/>
</dbReference>
<dbReference type="GO" id="GO:0003899">
    <property type="term" value="F:DNA-directed RNA polymerase activity"/>
    <property type="evidence" value="ECO:0007669"/>
    <property type="project" value="UniProtKB-EC"/>
</dbReference>
<dbReference type="GO" id="GO:0046872">
    <property type="term" value="F:metal ion binding"/>
    <property type="evidence" value="ECO:0007669"/>
    <property type="project" value="UniProtKB-KW"/>
</dbReference>
<dbReference type="GO" id="GO:0001172">
    <property type="term" value="P:RNA-templated transcription"/>
    <property type="evidence" value="ECO:0007669"/>
    <property type="project" value="GOC"/>
</dbReference>
<dbReference type="GO" id="GO:0006366">
    <property type="term" value="P:transcription by RNA polymerase II"/>
    <property type="evidence" value="ECO:0000315"/>
    <property type="project" value="SGD"/>
</dbReference>
<dbReference type="GO" id="GO:0006368">
    <property type="term" value="P:transcription elongation by RNA polymerase II"/>
    <property type="evidence" value="ECO:0000314"/>
    <property type="project" value="ComplexPortal"/>
</dbReference>
<dbReference type="GO" id="GO:0006367">
    <property type="term" value="P:transcription initiation at RNA polymerase II promoter"/>
    <property type="evidence" value="ECO:0000314"/>
    <property type="project" value="ComplexPortal"/>
</dbReference>
<dbReference type="GO" id="GO:0019985">
    <property type="term" value="P:translesion synthesis"/>
    <property type="evidence" value="ECO:0000315"/>
    <property type="project" value="SGD"/>
</dbReference>
<dbReference type="CDD" id="cd02584">
    <property type="entry name" value="RNAP_II_Rpb1_C"/>
    <property type="match status" value="1"/>
</dbReference>
<dbReference type="CDD" id="cd02733">
    <property type="entry name" value="RNAP_II_RPB1_N"/>
    <property type="match status" value="1"/>
</dbReference>
<dbReference type="DisProt" id="DP02527"/>
<dbReference type="FunFam" id="2.40.40.20:FF:000019">
    <property type="entry name" value="DNA-directed RNA polymerase II subunit RPB1"/>
    <property type="match status" value="1"/>
</dbReference>
<dbReference type="FunFam" id="1.10.132.30:FF:000001">
    <property type="entry name" value="DNA-directed RNA polymerase subunit"/>
    <property type="match status" value="1"/>
</dbReference>
<dbReference type="FunFam" id="1.10.150.390:FF:000001">
    <property type="entry name" value="DNA-directed RNA polymerase subunit"/>
    <property type="match status" value="1"/>
</dbReference>
<dbReference type="FunFam" id="1.10.274.100:FF:000001">
    <property type="entry name" value="DNA-directed RNA polymerase subunit"/>
    <property type="match status" value="1"/>
</dbReference>
<dbReference type="FunFam" id="3.30.1360.140:FF:000001">
    <property type="entry name" value="DNA-directed RNA polymerase subunit"/>
    <property type="match status" value="1"/>
</dbReference>
<dbReference type="FunFam" id="3.30.1490.180:FF:000001">
    <property type="entry name" value="DNA-directed RNA polymerase subunit"/>
    <property type="match status" value="1"/>
</dbReference>
<dbReference type="FunFam" id="4.10.860.120:FF:000003">
    <property type="entry name" value="DNA-directed RNA polymerase subunit"/>
    <property type="match status" value="1"/>
</dbReference>
<dbReference type="Gene3D" id="1.10.132.30">
    <property type="match status" value="1"/>
</dbReference>
<dbReference type="Gene3D" id="1.10.150.390">
    <property type="match status" value="1"/>
</dbReference>
<dbReference type="Gene3D" id="2.40.40.20">
    <property type="match status" value="1"/>
</dbReference>
<dbReference type="Gene3D" id="3.30.1360.140">
    <property type="match status" value="1"/>
</dbReference>
<dbReference type="Gene3D" id="6.10.250.2940">
    <property type="match status" value="1"/>
</dbReference>
<dbReference type="Gene3D" id="6.20.50.80">
    <property type="match status" value="1"/>
</dbReference>
<dbReference type="Gene3D" id="3.30.1490.180">
    <property type="entry name" value="RNA polymerase ii"/>
    <property type="match status" value="1"/>
</dbReference>
<dbReference type="Gene3D" id="4.10.860.120">
    <property type="entry name" value="RNA polymerase II, clamp domain"/>
    <property type="match status" value="2"/>
</dbReference>
<dbReference type="Gene3D" id="1.10.274.100">
    <property type="entry name" value="RNA polymerase Rpb1, domain 3"/>
    <property type="match status" value="1"/>
</dbReference>
<dbReference type="InterPro" id="IPR045867">
    <property type="entry name" value="DNA-dir_RpoC_beta_prime"/>
</dbReference>
<dbReference type="InterPro" id="IPR000722">
    <property type="entry name" value="RNA_pol_asu"/>
</dbReference>
<dbReference type="InterPro" id="IPR000684">
    <property type="entry name" value="RNA_pol_II_repeat_euk"/>
</dbReference>
<dbReference type="InterPro" id="IPR006592">
    <property type="entry name" value="RNA_pol_N"/>
</dbReference>
<dbReference type="InterPro" id="IPR007080">
    <property type="entry name" value="RNA_pol_Rpb1_1"/>
</dbReference>
<dbReference type="InterPro" id="IPR007066">
    <property type="entry name" value="RNA_pol_Rpb1_3"/>
</dbReference>
<dbReference type="InterPro" id="IPR042102">
    <property type="entry name" value="RNA_pol_Rpb1_3_sf"/>
</dbReference>
<dbReference type="InterPro" id="IPR007083">
    <property type="entry name" value="RNA_pol_Rpb1_4"/>
</dbReference>
<dbReference type="InterPro" id="IPR007081">
    <property type="entry name" value="RNA_pol_Rpb1_5"/>
</dbReference>
<dbReference type="InterPro" id="IPR007075">
    <property type="entry name" value="RNA_pol_Rpb1_6"/>
</dbReference>
<dbReference type="InterPro" id="IPR007073">
    <property type="entry name" value="RNA_pol_Rpb1_7"/>
</dbReference>
<dbReference type="InterPro" id="IPR038593">
    <property type="entry name" value="RNA_pol_Rpb1_7_sf"/>
</dbReference>
<dbReference type="InterPro" id="IPR044893">
    <property type="entry name" value="RNA_pol_Rpb1_clamp_domain"/>
</dbReference>
<dbReference type="InterPro" id="IPR038120">
    <property type="entry name" value="Rpb1_funnel_sf"/>
</dbReference>
<dbReference type="NCBIfam" id="NF006336">
    <property type="entry name" value="PRK08566.1"/>
    <property type="match status" value="1"/>
</dbReference>
<dbReference type="PANTHER" id="PTHR19376">
    <property type="entry name" value="DNA-DIRECTED RNA POLYMERASE"/>
    <property type="match status" value="1"/>
</dbReference>
<dbReference type="PANTHER" id="PTHR19376:SF37">
    <property type="entry name" value="DNA-DIRECTED RNA POLYMERASE II SUBUNIT RPB1"/>
    <property type="match status" value="1"/>
</dbReference>
<dbReference type="Pfam" id="PF04997">
    <property type="entry name" value="RNA_pol_Rpb1_1"/>
    <property type="match status" value="1"/>
</dbReference>
<dbReference type="Pfam" id="PF00623">
    <property type="entry name" value="RNA_pol_Rpb1_2"/>
    <property type="match status" value="1"/>
</dbReference>
<dbReference type="Pfam" id="PF04983">
    <property type="entry name" value="RNA_pol_Rpb1_3"/>
    <property type="match status" value="1"/>
</dbReference>
<dbReference type="Pfam" id="PF05000">
    <property type="entry name" value="RNA_pol_Rpb1_4"/>
    <property type="match status" value="1"/>
</dbReference>
<dbReference type="Pfam" id="PF04998">
    <property type="entry name" value="RNA_pol_Rpb1_5"/>
    <property type="match status" value="1"/>
</dbReference>
<dbReference type="Pfam" id="PF04992">
    <property type="entry name" value="RNA_pol_Rpb1_6"/>
    <property type="match status" value="1"/>
</dbReference>
<dbReference type="Pfam" id="PF04990">
    <property type="entry name" value="RNA_pol_Rpb1_7"/>
    <property type="match status" value="1"/>
</dbReference>
<dbReference type="Pfam" id="PF05001">
    <property type="entry name" value="RNA_pol_Rpb1_R"/>
    <property type="match status" value="25"/>
</dbReference>
<dbReference type="PRINTS" id="PR01217">
    <property type="entry name" value="PRICHEXTENSN"/>
</dbReference>
<dbReference type="SMART" id="SM00663">
    <property type="entry name" value="RPOLA_N"/>
    <property type="match status" value="1"/>
</dbReference>
<dbReference type="SUPFAM" id="SSF64484">
    <property type="entry name" value="beta and beta-prime subunits of DNA dependent RNA-polymerase"/>
    <property type="match status" value="1"/>
</dbReference>
<dbReference type="PROSITE" id="PS00115">
    <property type="entry name" value="RNA_POL_II_REPEAT"/>
    <property type="match status" value="22"/>
</dbReference>
<protein>
    <recommendedName>
        <fullName>DNA-directed RNA polymerase II subunit RPB1</fullName>
        <shortName>RNA polymerase II subunit 1</shortName>
        <shortName>RNA polymerase II subunit B1</shortName>
        <ecNumber>2.7.7.6</ecNumber>
    </recommendedName>
    <alternativeName>
        <fullName>DNA-directed RNA polymerase III largest subunit</fullName>
    </alternativeName>
    <alternativeName>
        <fullName>RNA polymerase II subunit B220</fullName>
    </alternativeName>
</protein>
<comment type="function">
    <text>DNA-dependent RNA polymerase catalyzes the transcription of DNA into RNA using the four ribonucleoside triphosphates as substrates. Largest and catalytic component of RNA polymerase II which synthesizes mRNA precursors and many functional non-coding RNAs. Forms the polymerase active center together with the second largest subunit. Pol II is the central component of the basal RNA polymerase II transcription machinery. During a transcription cycle, Pol II, general transcription factors and the Mediator complex assemble as the preinitiation complex (PIC) at the promoter. 11-15 base pairs of DNA surrounding the transcription start site are melted and the single-stranded DNA template strand of the promoter is positioned deeply within the central active site cleft of Pol II to form the open complex. After synthesis of about 30 bases of RNA, Pol II releases its contacts with the core promoter and the rest of the transcription machinery (promoter clearance) and enters the stage of transcription elongation in which it moves on the template as the transcript elongates. Pol II appears to oscillate between inactive and active conformations at each step of nucleotide addition. Elongation is influenced by the phosphorylation status of the C-terminal domain (CTD) of Pol II largest subunit (RPB1), which serves as a platform for assembly of factors that regulate transcription initiation, elongation, termination and mRNA processing. Pol II is composed of mobile elements that move relative to each other. The core element with the central large cleft comprises RPB3, RBP10, RPB11, RPB12 and regions of RPB1 and RPB2 forming the active center. The clamp element (portions of RPB1, RPB2 and RPB3) is connected to the core through a set of flexible switches and moves to open and close the cleft. A bridging helix emanates from RPB1 and crosses the cleft near the catalytic site and is thought to promote translocation of Pol II by acting as a ratchet that moves the RNA-DNA hybrid through the active site by switching from straight to bent conformations at each step of nucleotide addition. In elongating Pol II, the lid loop (RPB1) appears to act as a wedge to drive apart the DNA and RNA strands at the upstream end of the transcription bubble and guide the RNA strand toward the RNA exit groove located near the base of the largely unstructured CTD domain of RPB1. The rudder loop (RPB1) interacts with single-stranded DNA after separation from the RNA strand, likely preventing reassociation with the exiting RNA. The cleft is surrounded by jaws: an upper jaw formed by portions of RBP1, RPB2 and RPB9, and a lower jaw, formed by RPB5 and portions of RBP1. The jaws are thought to grab the incoming DNA template, mainly by RPB5 direct contacts to DNA.</text>
</comment>
<comment type="catalytic activity">
    <reaction>
        <text>RNA(n) + a ribonucleoside 5'-triphosphate = RNA(n+1) + diphosphate</text>
        <dbReference type="Rhea" id="RHEA:21248"/>
        <dbReference type="Rhea" id="RHEA-COMP:14527"/>
        <dbReference type="Rhea" id="RHEA-COMP:17342"/>
        <dbReference type="ChEBI" id="CHEBI:33019"/>
        <dbReference type="ChEBI" id="CHEBI:61557"/>
        <dbReference type="ChEBI" id="CHEBI:140395"/>
        <dbReference type="EC" id="2.7.7.6"/>
    </reaction>
</comment>
<comment type="subunit">
    <text evidence="2 4 6 7 10 12 14 16">Component of the RNA polymerase II (Pol II) complex consisting of 12 subunits (PubMed:11805306, PubMed:12914699, PubMed:16341226). Interacts with DEF1; the interaction is direct and serves to bridge RPB1 to the Elongin complex in a DNA-damaged dependent manner (PubMed:23993092). Interacts with the Elongin subunit ELA1 (PubMed:23993092). Interacts with the Elongin subunit ELC1 (PubMed:23993092). Interacts with ASK10 (PubMed:14555478). Interacts with ESS1 (PubMed:10531363). Interacts with RTT103 (PubMed:15565157). Interacts with SHE2 (PubMed:20713510).</text>
</comment>
<comment type="interaction">
    <interactant intactId="EBI-15760">
        <id>P04050</id>
    </interactant>
    <interactant intactId="EBI-29913">
        <id>Q06697</id>
        <label>CDC73</label>
    </interactant>
    <organismsDiffer>false</organismsDiffer>
    <experiments>17</experiments>
</comment>
<comment type="interaction">
    <interactant intactId="EBI-15760">
        <id>P04050</id>
    </interactant>
    <interactant intactId="EBI-5283">
        <id>P89105</id>
        <label>CTR9</label>
    </interactant>
    <organismsDiffer>false</organismsDiffer>
    <experiments>4</experiments>
</comment>
<comment type="interaction">
    <interactant intactId="EBI-15760">
        <id>P04050</id>
    </interactant>
    <interactant intactId="EBI-12228">
        <id>P53617</id>
        <label>NRD1</label>
    </interactant>
    <organismsDiffer>false</organismsDiffer>
    <experiments>2</experiments>
</comment>
<comment type="interaction">
    <interactant intactId="EBI-15760">
        <id>P04050</id>
    </interactant>
    <interactant intactId="EBI-15802">
        <id>P22139</id>
        <label>RPB10</label>
    </interactant>
    <organismsDiffer>false</organismsDiffer>
    <experiments>2</experiments>
</comment>
<comment type="interaction">
    <interactant intactId="EBI-15760">
        <id>P04050</id>
    </interactant>
    <interactant intactId="EBI-15767">
        <id>P08518</id>
        <label>RPB2</label>
    </interactant>
    <organismsDiffer>false</organismsDiffer>
    <experiments>5</experiments>
</comment>
<comment type="interaction">
    <interactant intactId="EBI-15760">
        <id>P04050</id>
    </interactant>
    <interactant intactId="EBI-16303">
        <id>P53064</id>
        <label>RTF1</label>
    </interactant>
    <organismsDiffer>false</organismsDiffer>
    <experiments>7</experiments>
</comment>
<comment type="interaction">
    <interactant intactId="EBI-15760">
        <id>P04050</id>
    </interactant>
    <interactant intactId="EBI-16945">
        <id>Q00416</id>
        <label>SEN1</label>
    </interactant>
    <organismsDiffer>false</organismsDiffer>
    <experiments>5</experiments>
</comment>
<comment type="interaction">
    <interactant intactId="EBI-15760">
        <id>P04050</id>
    </interactant>
    <interactant intactId="EBI-17937">
        <id>P27692</id>
        <label>SPT5</label>
    </interactant>
    <organismsDiffer>false</organismsDiffer>
    <experiments>4</experiments>
</comment>
<comment type="subcellular location">
    <subcellularLocation>
        <location>Nucleus</location>
    </subcellularLocation>
</comment>
<comment type="domain">
    <text evidence="20">The C-terminal domain (CTD) serves as a platform for assembly of factors that regulate transcription initiation, elongation, termination and mRNA processing.</text>
</comment>
<comment type="PTM">
    <text evidence="3 8 19">The tandem 7 residues repeats in the C-terminal domain (CTD) can be highly phosphorylated. The phosphorylation activates Pol II. Phosphorylation occurs mainly at residues 'Ser-2' and 'Ser-5' of the heptapeptide repeat. The phosphorylated form of Pol II appears to carry, on average, one phosphate per repeat. The phosphorylation state is believed to result from the balanced action of site-specific CTD kinases and phosphatases, and a 'CTD code' that specifies the position of Pol II within the transcription cycle has been proposed. Phosphorylation at 'Ser-5' occurs in promoter-proximal regions in early elongation. Phosphorylation at 'Ser-2' predominates in regions more distal to the promoter and triggers binding of the 3' RNA processing machinery. CTD kinases include KIN28 (as part of the TFKII complex, a subcomplex of the TFIIH holo complex), SSN3/SRB10 (as part of the SRB8-11 complex, a module of the Mediator complex), CTK1 (as part of CTD kinase), and probably BUR1 (as part of the BUR1-BUR2 kinase complex). Phosphatases include FCP1 and SSU72.</text>
</comment>
<comment type="PTM">
    <text evidence="5 9 11 13 18">Following transcription stress, the elongating form of RNA polymerase II (RNA pol IIo) is polyubiquitinated via 'Lys-63'-linkages on Lys-1246 by the RSP5-UBA1-UBC5 complex at DNA damage sites without leading to degradation: ubiquitination promotes RNA pol IIo backtracking to allow access by the transcription-coupled nucleotide excision repair (TC-NER) machinery (PubMed:15166235, PubMed:15960978, PubMed:19920177, PubMed:32142654). Subsequent DEF1-dependent polyubiquitination by the elongin complex via 'Lys-48'-linkages may lead to proteasome-mediated degradation; presumably at stalled RNA pol II where TC-NER has failed, to halt global transcription and enable 'last resort' DNA repair pathways (PubMed:11859374, PubMed:15166235, PubMed:19920177, PubMed:32142654).</text>
</comment>
<comment type="miscellaneous">
    <text>Mutagenesis experiments demonstrate that the minimum viable CTD contains eight consensus Y-S-P-T-S-P-[A-S-N-G] heptapeptide repeats. Identical and simultaneous substitutions in a number of consecutive repeats are lethal: 'Ser-2' -&gt; 'Ala-2' (14 repeats), 'Ser-5' -&gt; 'Ala-5' (15 repeats), '2-Ser-Pro-Thr-Ser-5'-&gt; '2-Ala-Pro-Thr-Ala-5' (10 repeats), 'Ser-2'-&gt; 'Glu-2' (15 repeats), 'Ser-5' -&gt; 'Glu-5' (12 repeats), '2-Ser-Pro-3' -&gt; '2-Pro-Ser-3' (15 repeats) and 'Tyr-1' -&gt; 'Phe-1' (12 repeats).</text>
</comment>
<comment type="miscellaneous">
    <text>The binding of ribonucleoside triphosphate to the RNA polymerase II transcribing complex probably involves a two-step mechanism. The initial binding seems to occur at the entry (E) site and involves a magnesium ion temporarily coordinated by three conserved aspartate residues of the two largest RNA Pol II subunits. The ribonucleoside triphosphate is transferred by a rotation to the nucleotide addition (A) site for pairing with the template DNA. The catalytic A site involves three conserved aspartate residues of the RNA Pol II largest subunit which permanently coordinate a second magnesium ion.</text>
</comment>
<comment type="similarity">
    <text evidence="20">Belongs to the RNA polymerase beta' chain family.</text>
</comment>
<organism>
    <name type="scientific">Saccharomyces cerevisiae (strain ATCC 204508 / S288c)</name>
    <name type="common">Baker's yeast</name>
    <dbReference type="NCBI Taxonomy" id="559292"/>
    <lineage>
        <taxon>Eukaryota</taxon>
        <taxon>Fungi</taxon>
        <taxon>Dikarya</taxon>
        <taxon>Ascomycota</taxon>
        <taxon>Saccharomycotina</taxon>
        <taxon>Saccharomycetes</taxon>
        <taxon>Saccharomycetales</taxon>
        <taxon>Saccharomycetaceae</taxon>
        <taxon>Saccharomyces</taxon>
    </lineage>
</organism>
<name>RPB1_YEAST</name>